<evidence type="ECO:0000250" key="1">
    <source>
        <dbReference type="UniProtKB" id="Q8BSQ9"/>
    </source>
</evidence>
<evidence type="ECO:0000255" key="2">
    <source>
        <dbReference type="PROSITE-ProRule" id="PRU00035"/>
    </source>
</evidence>
<evidence type="ECO:0000255" key="3">
    <source>
        <dbReference type="PROSITE-ProRule" id="PRU00267"/>
    </source>
</evidence>
<evidence type="ECO:0000255" key="4">
    <source>
        <dbReference type="PROSITE-ProRule" id="PRU00370"/>
    </source>
</evidence>
<evidence type="ECO:0000256" key="5">
    <source>
        <dbReference type="SAM" id="MobiDB-lite"/>
    </source>
</evidence>
<evidence type="ECO:0000269" key="6">
    <source>
    </source>
</evidence>
<evidence type="ECO:0000269" key="7">
    <source>
    </source>
</evidence>
<evidence type="ECO:0000269" key="8">
    <source>
    </source>
</evidence>
<evidence type="ECO:0000269" key="9">
    <source>
    </source>
</evidence>
<evidence type="ECO:0000269" key="10">
    <source>
    </source>
</evidence>
<evidence type="ECO:0000269" key="11">
    <source>
    </source>
</evidence>
<evidence type="ECO:0000269" key="12">
    <source>
    </source>
</evidence>
<evidence type="ECO:0000269" key="13">
    <source>
    </source>
</evidence>
<evidence type="ECO:0000303" key="14">
    <source>
    </source>
</evidence>
<evidence type="ECO:0000303" key="15">
    <source>
    </source>
</evidence>
<evidence type="ECO:0000303" key="16">
    <source>
    </source>
</evidence>
<evidence type="ECO:0000303" key="17">
    <source>
    </source>
</evidence>
<evidence type="ECO:0000303" key="18">
    <source>
    </source>
</evidence>
<evidence type="ECO:0000303" key="19">
    <source>
    </source>
</evidence>
<evidence type="ECO:0000305" key="20"/>
<evidence type="ECO:0007744" key="21">
    <source>
    </source>
</evidence>
<evidence type="ECO:0007744" key="22">
    <source>
    </source>
</evidence>
<evidence type="ECO:0007744" key="23">
    <source>
    </source>
</evidence>
<evidence type="ECO:0007744" key="24">
    <source>
    </source>
</evidence>
<evidence type="ECO:0007744" key="25">
    <source>
    </source>
</evidence>
<evidence type="ECO:0007744" key="26">
    <source>
    </source>
</evidence>
<evidence type="ECO:0007744" key="27">
    <source>
    </source>
</evidence>
<evidence type="ECO:0007744" key="28">
    <source>
    </source>
</evidence>
<evidence type="ECO:0007744" key="29">
    <source>
    </source>
</evidence>
<evidence type="ECO:0007744" key="30">
    <source>
    </source>
</evidence>
<evidence type="ECO:0007744" key="31">
    <source>
    </source>
</evidence>
<evidence type="ECO:0007744" key="32">
    <source>
    </source>
</evidence>
<evidence type="ECO:0007744" key="33">
    <source>
    </source>
</evidence>
<evidence type="ECO:0007829" key="34">
    <source>
        <dbReference type="PDB" id="2KTB"/>
    </source>
</evidence>
<evidence type="ECO:0007829" key="35">
    <source>
        <dbReference type="PDB" id="3G0J"/>
    </source>
</evidence>
<evidence type="ECO:0007829" key="36">
    <source>
        <dbReference type="PDB" id="3IU5"/>
    </source>
</evidence>
<evidence type="ECO:0007829" key="37">
    <source>
        <dbReference type="PDB" id="3IU6"/>
    </source>
</evidence>
<evidence type="ECO:0007829" key="38">
    <source>
        <dbReference type="PDB" id="3K2J"/>
    </source>
</evidence>
<evidence type="ECO:0007829" key="39">
    <source>
        <dbReference type="PDB" id="3TLP"/>
    </source>
</evidence>
<evidence type="ECO:0007829" key="40">
    <source>
        <dbReference type="PDB" id="5FH7"/>
    </source>
</evidence>
<evidence type="ECO:0007829" key="41">
    <source>
        <dbReference type="PDB" id="6OXB"/>
    </source>
</evidence>
<evidence type="ECO:0007829" key="42">
    <source>
        <dbReference type="PDB" id="6ZNV"/>
    </source>
</evidence>
<evidence type="ECO:0007829" key="43">
    <source>
        <dbReference type="PDB" id="7VDV"/>
    </source>
</evidence>
<sequence>MGSKRRRATSPSSSVSGDFDDGHHSVSTPGPSRKRRRLSNLPTVDPIAVCHELYNTIRDYKDEQGRLLCELFIRAPKRRNQPDYYEVVSQPIDLMKIQQKLKMEEYDDVNLLTADFQLLFNNAKSYYKPDSPEYKAACKLWDLYLRTRNEFVQKGEADDEDDDEDGQDNQGTVTEGSSPAYLKEILEQLLEAIVVATNPSGRLISELFQKLPSKVQYPDYYAIIKEPIDLKTIAQRIQNGSYKSIHAMAKDIDLLAKNAKTYNEPGSQVFKDANSIKKIFYMKKAEIEHHEMAKSSLRMRTPSNLAAARLTGPSHSKGSLGEERNPTSKYYRNKRAVQGGRLSAITMALQYGSESEEDAALAAARYEEGESEAESITSFMDVSNPFYQLYDTVRSCRNNQGQLIAEPFYHLPSKKKYPDYYQQIKMPISLQQIRTKLKNQEYETLDHLECDLNLMFENAKRYNVPNSAIYKRVLKLQQVMQAKKKELARRDDIEDGDSMISSATSDTGSAKRKSKKNIRKQRMKILFNVVLEAREPGSGRRLCDLFMVKPSKKDYPDYYKIILEPMDLKIIEHNIRNDKYAGEEGMIEDMKLMFRNARHYNEEGSQVYNDAHILEKLLKEKRKELGPLPDDDDMASPKLKLSRKSGISPKKSKYMTPMQQKLNEVYEAVKNYTDKRGRRLSAIFLRLPSRSELPDYYLTIKKPMDMEKIRSHMMANKYQDIDSMVEDFVMMFNNACTYNEPESLIYKDALVLHKVLLETRRDLEGDEDSHVPNVTLLIQELIHNLFVSVMSHQDDEGRCYSDSLAEIPAVDPNFPNKPPLTFDIIRKNVENNRYRRLDLFQEHMFEVLERARRMNRTDSEIYEDAVELQQFFIKIRDELCKNGEILLSPALSYTTKHLHNDVEKERKEKLPKEIEEDKLKREEEKREAEKSEDSSGAAGLSGLHRTYSQDCSFKNSMYHVGDYVYVEPAEANLQPHIVCIERLWEDSAGEKWLYGCWFYRPNETFHLATRKFLEKEVFKSDYYNKVPVSKILGKCVVMFVKEYFKLCPENFRDEDVFVCESRYSAKTKSFKKIKLWTMPISSVRFVPRDVPLPVVRVASVFANADKGDDEKNTDNSEDSRAEDNFNLEKEKEDVPVEMSNGEPGCHYFEQLHYNDMWLKVGDCVFIKSHGLVRPRVGRIEKVWVRDGAAYFYGPIFIHPEETEHEPTKMFYKKEVFLSNLEETCPMTCILGKCAVLSFKDFLSCRPTEIPENDILLCESRYNESDKQMKKFKGLKRFSLSAKVVDDEIYYFRKPIVPQKEPSPLLEKKIQLLEAKFAELEGGDDDIEEMGEEDSEVIEPPSLPQLQTPLASELDLMPYTPPQSTPKSAKGSAKKEGSKRKINMSGYILFSSEMRAVIKAQHPDYSFGELSRLVGTEWRNLETAKKAEYEERAAKVAEQQERERAAQQQQPSASPRAGTPVGALMGVVPPPTPMGMLNQQLTPVAGMMGGYPPGLPPLQGPVDGLVSMGSMQPLHPGGPPPHHLPPGVPGLPGIPPPGVMNQGVAPMVGTPAPGGSPYGQQVGVLGPPGQQAPPPYPGPHPAGPPVIQQPTTPMFVAPPPKTQRLLHSEAYLKYIEGLSAESNSISKWDQTLAARRRDVHLSKEQESRLPSHWLKSKGAHTTMADALWRLRDLMLRDTLNIRQAYNLENV</sequence>
<name>PB1_HUMAN</name>
<protein>
    <recommendedName>
        <fullName>Protein polybromo-1</fullName>
        <shortName>hPB1</shortName>
    </recommendedName>
    <alternativeName>
        <fullName>BRG1-associated factor 180</fullName>
        <shortName>BAF180</shortName>
    </alternativeName>
    <alternativeName>
        <fullName>Polybromo-1D</fullName>
    </alternativeName>
</protein>
<feature type="chain" id="PRO_0000211207" description="Protein polybromo-1">
    <location>
        <begin position="1"/>
        <end position="1689"/>
    </location>
</feature>
<feature type="domain" description="Bromo 1" evidence="2">
    <location>
        <begin position="41"/>
        <end position="151"/>
    </location>
</feature>
<feature type="domain" description="Bromo 2" evidence="2">
    <location>
        <begin position="177"/>
        <end position="287"/>
    </location>
</feature>
<feature type="domain" description="Bromo 3" evidence="2">
    <location>
        <begin position="381"/>
        <end position="487"/>
    </location>
</feature>
<feature type="domain" description="Bromo 4" evidence="2">
    <location>
        <begin position="518"/>
        <end position="625"/>
    </location>
</feature>
<feature type="domain" description="Bromo 5" evidence="2">
    <location>
        <begin position="653"/>
        <end position="763"/>
    </location>
</feature>
<feature type="domain" description="Bromo 6" evidence="2">
    <location>
        <begin position="769"/>
        <end position="879"/>
    </location>
</feature>
<feature type="domain" description="BAH 1" evidence="4">
    <location>
        <begin position="956"/>
        <end position="1074"/>
    </location>
</feature>
<feature type="domain" description="BAH 2" evidence="4">
    <location>
        <begin position="1156"/>
        <end position="1272"/>
    </location>
</feature>
<feature type="DNA-binding region" description="HMG box" evidence="3">
    <location>
        <begin position="1379"/>
        <end position="1447"/>
    </location>
</feature>
<feature type="region of interest" description="Disordered" evidence="5">
    <location>
        <begin position="1"/>
        <end position="39"/>
    </location>
</feature>
<feature type="region of interest" description="Disordered" evidence="5">
    <location>
        <begin position="155"/>
        <end position="177"/>
    </location>
</feature>
<feature type="region of interest" description="Disordered" evidence="5">
    <location>
        <begin position="487"/>
        <end position="517"/>
    </location>
</feature>
<feature type="region of interest" description="Disordered" evidence="5">
    <location>
        <begin position="625"/>
        <end position="646"/>
    </location>
</feature>
<feature type="region of interest" description="Disordered" evidence="5">
    <location>
        <begin position="902"/>
        <end position="941"/>
    </location>
</feature>
<feature type="region of interest" description="Disordered" evidence="5">
    <location>
        <begin position="1106"/>
        <end position="1133"/>
    </location>
</feature>
<feature type="region of interest" description="Disordered" evidence="5">
    <location>
        <begin position="1354"/>
        <end position="1378"/>
    </location>
</feature>
<feature type="region of interest" description="Disordered" evidence="5">
    <location>
        <begin position="1431"/>
        <end position="1460"/>
    </location>
</feature>
<feature type="compositionally biased region" description="Acidic residues" evidence="5">
    <location>
        <begin position="157"/>
        <end position="167"/>
    </location>
</feature>
<feature type="compositionally biased region" description="Polar residues" evidence="5">
    <location>
        <begin position="499"/>
        <end position="508"/>
    </location>
</feature>
<feature type="compositionally biased region" description="Basic and acidic residues" evidence="5">
    <location>
        <begin position="902"/>
        <end position="933"/>
    </location>
</feature>
<feature type="compositionally biased region" description="Basic and acidic residues" evidence="5">
    <location>
        <begin position="1431"/>
        <end position="1444"/>
    </location>
</feature>
<feature type="modified residue" description="Phosphoserine" evidence="23 24">
    <location>
        <position position="10"/>
    </location>
</feature>
<feature type="modified residue" description="Phosphoserine" evidence="22 23 24 25 28">
    <location>
        <position position="39"/>
    </location>
</feature>
<feature type="modified residue" description="Phosphoserine" evidence="23">
    <location>
        <position position="131"/>
    </location>
</feature>
<feature type="modified residue" description="Phosphotyrosine" evidence="27">
    <location>
        <position position="134"/>
    </location>
</feature>
<feature type="modified residue" description="Phosphoserine" evidence="27">
    <location>
        <position position="178"/>
    </location>
</feature>
<feature type="modified residue" description="Phosphoserine" evidence="23">
    <location>
        <position position="316"/>
    </location>
</feature>
<feature type="modified residue" description="Phosphoserine" evidence="23">
    <location>
        <position position="319"/>
    </location>
</feature>
<feature type="modified residue" description="Phosphoserine" evidence="23 24 25 26">
    <location>
        <position position="353"/>
    </location>
</feature>
<feature type="modified residue" description="Phosphoserine" evidence="23 24 25 26">
    <location>
        <position position="355"/>
    </location>
</feature>
<feature type="modified residue" description="Phosphoserine" evidence="24">
    <location>
        <position position="371"/>
    </location>
</feature>
<feature type="modified residue" description="Phosphoserine" evidence="24">
    <location>
        <position position="375"/>
    </location>
</feature>
<feature type="modified residue" description="N6-acetyllysine" evidence="1">
    <location>
        <position position="414"/>
    </location>
</feature>
<feature type="modified residue" description="Phosphoserine" evidence="24 27">
    <location>
        <position position="498"/>
    </location>
</feature>
<feature type="modified residue" description="Phosphoserine" evidence="27">
    <location>
        <position position="509"/>
    </location>
</feature>
<feature type="modified residue" description="Phosphoserine" evidence="24 25 26 27">
    <location>
        <position position="636"/>
    </location>
</feature>
<feature type="modified residue" description="Phosphoserine" evidence="26">
    <location>
        <position position="648"/>
    </location>
</feature>
<feature type="modified residue" description="Phosphoserine" evidence="27">
    <location>
        <position position="689"/>
    </location>
</feature>
<feature type="modified residue" description="Phosphoserine" evidence="27 28">
    <location>
        <position position="948"/>
    </location>
</feature>
<feature type="modified residue" description="Phosphoserine" evidence="27">
    <location>
        <position position="987"/>
    </location>
</feature>
<feature type="modified residue" description="Phosphoserine" evidence="27">
    <location>
        <position position="1119"/>
    </location>
</feature>
<feature type="modified residue" description="Phosphotyrosine" evidence="1">
    <location>
        <position position="1289"/>
    </location>
</feature>
<feature type="modified residue" description="Phosphoserine" evidence="23 25 27">
    <location>
        <position position="1405"/>
    </location>
</feature>
<feature type="modified residue" description="Phosphoserine" evidence="21 25 26">
    <location>
        <position position="1453"/>
    </location>
</feature>
<feature type="cross-link" description="Glycyl lysine isopeptide (Lys-Gly) (interchain with G-Cter in SUMO2)" evidence="33">
    <location>
        <position position="96"/>
    </location>
</feature>
<feature type="cross-link" description="Glycyl lysine isopeptide (Lys-Gly) (interchain with G-Cter in SUMO2)" evidence="33">
    <location>
        <position position="154"/>
    </location>
</feature>
<feature type="cross-link" description="Glycyl lysine isopeptide (Lys-Gly) (interchain with G-Cter in SUMO2)" evidence="33">
    <location>
        <position position="210"/>
    </location>
</feature>
<feature type="cross-link" description="Glycyl lysine isopeptide (Lys-Gly) (interchain with G-Cter in SUMO2)" evidence="33">
    <location>
        <position position="425"/>
    </location>
</feature>
<feature type="cross-link" description="Glycyl lysine isopeptide (Lys-Gly) (interchain with G-Cter in SUMO2)" evidence="33">
    <location>
        <position position="471"/>
    </location>
</feature>
<feature type="cross-link" description="Glycyl lysine isopeptide (Lys-Gly) (interchain with G-Cter in SUMO2)" evidence="33">
    <location>
        <position position="511"/>
    </location>
</feature>
<feature type="cross-link" description="Glycyl lysine isopeptide (Lys-Gly) (interchain with G-Cter in SUMO2)" evidence="33">
    <location>
        <position position="591"/>
    </location>
</feature>
<feature type="cross-link" description="Glycyl lysine isopeptide (Lys-Gly) (interchain with G-Cter in SUMO2)" evidence="33">
    <location>
        <position position="638"/>
    </location>
</feature>
<feature type="cross-link" description="Glycyl lysine isopeptide (Lys-Gly) (interchain with G-Cter in SUMO2)" evidence="31 33">
    <location>
        <position position="653"/>
    </location>
</feature>
<feature type="cross-link" description="Glycyl lysine isopeptide (Lys-Gly) (interchain with G-Cter in SUMO2)" evidence="33">
    <location>
        <position position="1106"/>
    </location>
</feature>
<feature type="cross-link" description="Glycyl lysine isopeptide (Lys-Gly) (interchain with G-Cter in SUMO2)" evidence="33">
    <location>
        <position position="1111"/>
    </location>
</feature>
<feature type="cross-link" description="Glycyl lysine isopeptide (Lys-Gly) (interchain with G-Cter in SUMO2)" evidence="33">
    <location>
        <position position="1167"/>
    </location>
</feature>
<feature type="cross-link" description="Glycyl lysine isopeptide (Lys-Gly) (interchain with G-Cter in SUMO1); alternate" evidence="29">
    <location>
        <position position="1293"/>
    </location>
</feature>
<feature type="cross-link" description="Glycyl lysine isopeptide (Lys-Gly) (interchain with G-Cter in SUMO2); alternate" evidence="29 30 31 32 33">
    <location>
        <position position="1293"/>
    </location>
</feature>
<feature type="cross-link" description="Glycyl lysine isopeptide (Lys-Gly) (interchain with G-Cter in SUMO2)" evidence="31 33">
    <location>
        <position position="1308"/>
    </location>
</feature>
<feature type="cross-link" description="Glycyl lysine isopeptide (Lys-Gly) (interchain with G-Cter in SUMO2)" evidence="31 33">
    <location>
        <position position="1398"/>
    </location>
</feature>
<feature type="cross-link" description="Glycyl lysine isopeptide (Lys-Gly) (interchain with G-Cter in SUMO2)" evidence="33">
    <location>
        <position position="1642"/>
    </location>
</feature>
<feature type="cross-link" description="Glycyl lysine isopeptide (Lys-Gly) (interchain with G-Cter in SUMO2)" evidence="33">
    <location>
        <position position="1654"/>
    </location>
</feature>
<feature type="cross-link" description="Glycyl lysine isopeptide (Lys-Gly) (interchain with G-Cter in SUMO2)" evidence="33">
    <location>
        <position position="1656"/>
    </location>
</feature>
<feature type="splice variant" id="VSP_015231" description="In isoform 3." evidence="15">
    <original>RTPSNLAAARLTGPSHSKGSLGEERNPTSKYYR</original>
    <variation>S</variation>
    <location>
        <begin position="300"/>
        <end position="332"/>
    </location>
</feature>
<feature type="splice variant" id="VSP_035499" description="In isoform 7 and isoform 8." evidence="16 17">
    <original>K</original>
    <variation>KRNTHDSEMLGLRRLS</variation>
    <location>
        <position position="513"/>
    </location>
</feature>
<feature type="splice variant" id="VSP_015232" description="In isoform 6." evidence="15">
    <location>
        <begin position="857"/>
        <end position="1689"/>
    </location>
</feature>
<feature type="splice variant" id="VSP_015233" description="In isoform 4 and isoform 9." evidence="14 17">
    <location>
        <begin position="989"/>
        <end position="1013"/>
    </location>
</feature>
<feature type="splice variant" id="VSP_015234" description="In isoform 4." evidence="14 17">
    <location>
        <begin position="1336"/>
        <end position="1362"/>
    </location>
</feature>
<feature type="splice variant" id="VSP_015235" description="In isoform 2, isoform 3, isoform 4, isoform 5, isoform 7 and isoform 9." evidence="14 15 16 17">
    <location>
        <begin position="1430"/>
        <end position="1484"/>
    </location>
</feature>
<feature type="splice variant" id="VSP_015236" description="In isoform 5, isoform 7 and isoform 8." evidence="15 16 17">
    <location>
        <begin position="1485"/>
        <end position="1536"/>
    </location>
</feature>
<feature type="sequence variant" id="VAR_064653" description="Found in a lung cancer cell line; dbSNP:rs542945393." evidence="11">
    <original>V</original>
    <variation>L</variation>
    <location>
        <position position="49"/>
    </location>
</feature>
<feature type="sequence variant" id="VAR_064654" description="Found in a brain cancer cell line; dbSNP:rs923060956." evidence="11">
    <original>T</original>
    <variation>A</variation>
    <location>
        <position position="56"/>
    </location>
</feature>
<feature type="sequence variant" id="VAR_064655" description="Found in a case of clear cell renal carcinoma; somatic mutation." evidence="11">
    <location>
        <position position="57"/>
    </location>
</feature>
<feature type="sequence variant" id="VAR_064656" description="Found in a colon cancer cell line; dbSNP:rs368888772." evidence="11">
    <original>R</original>
    <variation>G</variation>
    <location>
        <position position="66"/>
    </location>
</feature>
<feature type="sequence variant" id="VAR_064657" description="Found in a bladder cancer cell line." evidence="11">
    <original>Q</original>
    <variation>E</variation>
    <location>
        <position position="90"/>
    </location>
</feature>
<feature type="sequence variant" id="VAR_064658" description="Found in a malignant melanoma cell line; dbSNP:rs2153927262." evidence="11">
    <original>Y</original>
    <variation>F</variation>
    <location>
        <position position="144"/>
    </location>
</feature>
<feature type="sequence variant" id="VAR_064659" description="Found in a malignant melanoma cell line." evidence="11">
    <original>E</original>
    <variation>A</variation>
    <location>
        <position position="160"/>
    </location>
</feature>
<feature type="sequence variant" id="VAR_064660" description="Found in a endometrial cancer cell line; dbSNP:rs765525545." evidence="11">
    <original>R</original>
    <variation>C</variation>
    <location>
        <position position="202"/>
    </location>
</feature>
<feature type="sequence variant" id="VAR_064661" description="Found in hematopoietic and lymphoid cancer cell lines; dbSNP:rs1359676390." evidence="11">
    <original>E</original>
    <variation>K</variation>
    <location>
        <position position="206"/>
    </location>
</feature>
<feature type="sequence variant" id="VAR_064662" description="Found in hematopoietic and lymphoid cancer cell lines." evidence="11">
    <original>E</original>
    <variation>G</variation>
    <location>
        <position position="226"/>
    </location>
</feature>
<feature type="sequence variant" id="VAR_064663" description="Found in a breast cancer cell line; dbSNP:rs201022657." evidence="11">
    <original>I</original>
    <variation>V</variation>
    <location>
        <position position="228"/>
    </location>
</feature>
<feature type="sequence variant" id="VAR_064664" description="Found in a case of clear cell renal carcinoma; somatic mutation." evidence="11">
    <original>T</original>
    <variation>P</variation>
    <location>
        <position position="232"/>
    </location>
</feature>
<feature type="sequence variant" id="VAR_064665" description="Found in a renal carcinoma cell line." evidence="11">
    <original>I</original>
    <variation>T</variation>
    <location>
        <position position="233"/>
    </location>
</feature>
<feature type="sequence variant" id="VAR_064666" description="Found in an ovary carcinoma cell line; dbSNP:rs776146971." evidence="11">
    <original>A</original>
    <variation>T</variation>
    <location>
        <position position="256"/>
    </location>
</feature>
<feature type="sequence variant" id="VAR_064667" description="Found in a malignant melanoma cell line; dbSNP:rs200106731." evidence="11">
    <original>G</original>
    <variation>A</variation>
    <location>
        <position position="340"/>
    </location>
</feature>
<feature type="sequence variant" id="VAR_064668" description="Found in a case of clear cell renal carcinoma; somatic mutation; dbSNP:rs2153490743." evidence="11">
    <original>M</original>
    <variation>I</variation>
    <location>
        <position position="523"/>
    </location>
</feature>
<feature type="sequence variant" id="VAR_064669" description="Found in a case of clear cell renal carcinoma; somatic mutation." evidence="11">
    <original>R</original>
    <variation>S</variation>
    <location>
        <position position="540"/>
    </location>
</feature>
<feature type="sequence variant" id="VAR_064670" description="Found in a case of clear cell renal carcinoma; somatic mutation." evidence="11">
    <original>A</original>
    <variation>D</variation>
    <location>
        <position position="597"/>
    </location>
</feature>
<feature type="sequence variant" id="VAR_064671" description="Found in a case of clear cell renal carcinoma; somatic mutation." evidence="11">
    <original>K</original>
    <variation>E</variation>
    <location>
        <position position="621"/>
    </location>
</feature>
<feature type="sequence variant" id="VAR_064672" description="Found in a case of clear cell renal carcinoma; somatic mutation." evidence="11">
    <original>K</original>
    <variation>N</variation>
    <location>
        <position position="661"/>
    </location>
</feature>
<feature type="sequence variant" id="VAR_064673" description="Found in a case of clear cell renal carcinoma; somatic mutation." evidence="11">
    <original>D</original>
    <variation>E</variation>
    <location>
        <position position="674"/>
    </location>
</feature>
<feature type="sequence variant" id="VAR_064674" description="In dbSNP:rs1422119249." evidence="11">
    <original>R</original>
    <variation>C</variation>
    <location>
        <position position="678"/>
    </location>
</feature>
<feature type="sequence variant" id="VAR_064675" description="Found in hematopoietic, lymphoid, lung and liver cancer cell lines; dbSNP:rs753344888." evidence="11">
    <original>Y</original>
    <variation>C</variation>
    <location>
        <position position="893"/>
    </location>
</feature>
<feature type="sequence variant" id="VAR_064676" description="Found in a lung cancer cell line." evidence="11">
    <original>T</original>
    <variation>S</variation>
    <location>
        <position position="895"/>
    </location>
</feature>
<feature type="sequence variant" id="VAR_064677" description="Found in a breast cancer cell line." evidence="11">
    <original>E</original>
    <variation>Q</variation>
    <location>
        <position position="922"/>
    </location>
</feature>
<feature type="sequence variant" id="VAR_064678" description="Found in a colon cancer cell line." evidence="11">
    <original>K</original>
    <variation>Q</variation>
    <location>
        <position position="925"/>
    </location>
</feature>
<feature type="sequence variant" id="VAR_064679" description="Found in a colon cancer cell line; requires 2 nucleotide substitutions." evidence="11">
    <original>P</original>
    <variation>Y</variation>
    <location>
        <position position="1079"/>
    </location>
</feature>
<feature type="sequence variant" id="VAR_064680" description="Found in hematopoietic and lymphoid cancer cell lines; dbSNP:rs201156614." evidence="11">
    <original>A</original>
    <variation>S</variation>
    <location>
        <position position="1098"/>
    </location>
</feature>
<feature type="sequence variant" id="VAR_064681" description="Found in hematopoietic and lymphoid cancer cell lines; dbSNP:rs35102895." evidence="11">
    <original>R</original>
    <variation>Q</variation>
    <location>
        <position position="1120"/>
    </location>
</feature>
<feature type="sequence variant" id="VAR_064682" description="Found in a kidney cancer cell line." evidence="11">
    <original>G</original>
    <variation>S</variation>
    <location>
        <position position="1177"/>
    </location>
</feature>
<feature type="sequence variant" id="VAR_064683" description="Found in a case of clear cell renal carcinoma; somatic mutation." evidence="11">
    <original>H</original>
    <variation>P</variation>
    <location>
        <position position="1204"/>
    </location>
</feature>
<feature type="sequence variant" id="VAR_064684" description="Found in a case of clear cell renal carcinoma; somatic mutation." evidence="11">
    <location>
        <begin position="1209"/>
        <end position="1214"/>
    </location>
</feature>
<feature type="sequence variant" id="VAR_064685" description="Found in a breast cancer cell line; dbSNP:rs2084387436." evidence="11">
    <original>E</original>
    <variation>Q</variation>
    <location>
        <position position="1287"/>
    </location>
</feature>
<feature type="sequence variant" id="VAR_064686" description="Found in a lung cancer cell line; dbSNP:rs2153489547." evidence="11">
    <original>G</original>
    <variation>E</variation>
    <location>
        <position position="1414"/>
    </location>
</feature>
<feature type="sequence variant" id="VAR_064687" description="Found in a stomach cancer cell line." evidence="11">
    <original>G</original>
    <variation>C</variation>
    <location>
        <position position="1503"/>
    </location>
</feature>
<feature type="sequence variant" id="VAR_064688" description="Found in an endometrial cancer cell line." evidence="11">
    <original>Q</original>
    <variation>H</variation>
    <location>
        <position position="1560"/>
    </location>
</feature>
<feature type="sequence variant" id="VAR_064689" description="Found in a case of clear cell renal carcinoma; somatic mutation; dbSNP:rs2080680257." evidence="11">
    <original>I</original>
    <variation>N</variation>
    <location>
        <position position="1614"/>
    </location>
</feature>
<feature type="sequence variant" id="VAR_064690" description="Found in a breast cancer cell line; dbSNP:rs200020801." evidence="11">
    <original>R</original>
    <variation>C</variation>
    <location>
        <position position="1647"/>
    </location>
</feature>
<feature type="sequence conflict" description="In Ref. 4; AAI15011." evidence="20" ref="4">
    <original>M</original>
    <variation>T</variation>
    <location>
        <position position="1"/>
    </location>
</feature>
<feature type="sequence conflict" description="In Ref. 4; AAI15011." evidence="20" ref="4">
    <original>G</original>
    <variation>S</variation>
    <location>
        <position position="65"/>
    </location>
</feature>
<feature type="sequence conflict" description="In Ref. 4; AAI15012." evidence="20" ref="4">
    <original>Y</original>
    <variation>C</variation>
    <location>
        <position position="242"/>
    </location>
</feature>
<feature type="sequence conflict" description="In Ref. 4; AAI15011." evidence="20" ref="4">
    <original>D</original>
    <variation>V</variation>
    <location>
        <position position="251"/>
    </location>
</feature>
<feature type="sequence conflict" description="In Ref. 4; AAI15012." evidence="20" ref="4">
    <original>L</original>
    <variation>P</variation>
    <location>
        <position position="430"/>
    </location>
</feature>
<feature type="sequence conflict" description="In Ref. 1; AAG34760." evidence="20" ref="1">
    <original>K</original>
    <variation>R</variation>
    <location>
        <position position="553"/>
    </location>
</feature>
<feature type="sequence conflict" description="In Ref. 4; AAI15012." evidence="20" ref="4">
    <original>D</original>
    <variation>Y</variation>
    <location>
        <position position="567"/>
    </location>
</feature>
<feature type="sequence conflict" description="In Ref. 4; AAI15012." evidence="20" ref="4">
    <original>L</original>
    <variation>P</variation>
    <location>
        <position position="750"/>
    </location>
</feature>
<feature type="sequence conflict" description="In Ref. 4; AAI15012." evidence="20" ref="4">
    <original>H</original>
    <variation>R</variation>
    <location>
        <position position="792"/>
    </location>
</feature>
<feature type="sequence conflict" description="In Ref. 4; AAI15010 and 5; BAB71210." evidence="20" ref="4 5">
    <location>
        <position position="927"/>
    </location>
</feature>
<feature type="sequence conflict" description="In Ref. 5; BAB71210." evidence="20" ref="5">
    <original>Y</original>
    <variation>H</variation>
    <location>
        <position position="963"/>
    </location>
</feature>
<feature type="sequence conflict" description="In Ref. 1; AAG34760." evidence="20" ref="1">
    <original>G</original>
    <variation>V</variation>
    <location>
        <position position="1144"/>
    </location>
</feature>
<feature type="sequence conflict" description="In Ref. 1; AAG34760." evidence="20" ref="1">
    <original>R</original>
    <variation>K</variation>
    <location>
        <position position="1245"/>
    </location>
</feature>
<feature type="sequence conflict" description="In Ref. 1; AAG34760." evidence="20" ref="1">
    <original>E</original>
    <variation>G</variation>
    <location>
        <position position="1306"/>
    </location>
</feature>
<feature type="sequence conflict" description="In Ref. 4; AAI15010." evidence="20" ref="4">
    <original>L</original>
    <variation>P</variation>
    <location>
        <position position="1349"/>
    </location>
</feature>
<feature type="sequence conflict" description="In Ref. 4; AAI15012." evidence="20" ref="4">
    <original>G</original>
    <variation>D</variation>
    <location>
        <position position="1488"/>
    </location>
</feature>
<feature type="sequence conflict" description="In Ref. 1; AAG34760." evidence="20" ref="1">
    <original>G</original>
    <variation>R</variation>
    <location>
        <position position="1568"/>
    </location>
</feature>
<feature type="helix" evidence="36">
    <location>
        <begin position="46"/>
        <end position="59"/>
    </location>
</feature>
<feature type="helix" evidence="36">
    <location>
        <begin position="68"/>
        <end position="72"/>
    </location>
</feature>
<feature type="helix" evidence="36">
    <location>
        <begin position="78"/>
        <end position="80"/>
    </location>
</feature>
<feature type="helix" evidence="36">
    <location>
        <begin position="82"/>
        <end position="87"/>
    </location>
</feature>
<feature type="helix" evidence="36">
    <location>
        <begin position="94"/>
        <end position="102"/>
    </location>
</feature>
<feature type="helix" evidence="36">
    <location>
        <begin position="109"/>
        <end position="126"/>
    </location>
</feature>
<feature type="helix" evidence="36">
    <location>
        <begin position="132"/>
        <end position="152"/>
    </location>
</feature>
<feature type="strand" evidence="34">
    <location>
        <begin position="176"/>
        <end position="178"/>
    </location>
</feature>
<feature type="helix" evidence="42">
    <location>
        <begin position="179"/>
        <end position="195"/>
    </location>
</feature>
<feature type="helix" evidence="42">
    <location>
        <begin position="206"/>
        <end position="208"/>
    </location>
</feature>
<feature type="turn" evidence="42">
    <location>
        <begin position="214"/>
        <end position="216"/>
    </location>
</feature>
<feature type="helix" evidence="42">
    <location>
        <begin position="218"/>
        <end position="223"/>
    </location>
</feature>
<feature type="helix" evidence="42">
    <location>
        <begin position="230"/>
        <end position="239"/>
    </location>
</feature>
<feature type="helix" evidence="42">
    <location>
        <begin position="245"/>
        <end position="262"/>
    </location>
</feature>
<feature type="helix" evidence="42">
    <location>
        <begin position="268"/>
        <end position="289"/>
    </location>
</feature>
<feature type="helix" evidence="38">
    <location>
        <begin position="388"/>
        <end position="394"/>
    </location>
</feature>
<feature type="strand" evidence="38">
    <location>
        <begin position="399"/>
        <end position="401"/>
    </location>
</feature>
<feature type="helix" evidence="38">
    <location>
        <begin position="406"/>
        <end position="408"/>
    </location>
</feature>
<feature type="turn" evidence="38">
    <location>
        <begin position="414"/>
        <end position="416"/>
    </location>
</feature>
<feature type="helix" evidence="38">
    <location>
        <begin position="418"/>
        <end position="423"/>
    </location>
</feature>
<feature type="helix" evidence="38">
    <location>
        <begin position="430"/>
        <end position="438"/>
    </location>
</feature>
<feature type="helix" evidence="38">
    <location>
        <begin position="445"/>
        <end position="462"/>
    </location>
</feature>
<feature type="helix" evidence="38">
    <location>
        <begin position="468"/>
        <end position="490"/>
    </location>
</feature>
<feature type="helix" evidence="39">
    <location>
        <begin position="511"/>
        <end position="532"/>
    </location>
</feature>
<feature type="turn" evidence="39">
    <location>
        <begin position="536"/>
        <end position="538"/>
    </location>
</feature>
<feature type="helix" evidence="39">
    <location>
        <begin position="542"/>
        <end position="546"/>
    </location>
</feature>
<feature type="turn" evidence="39">
    <location>
        <begin position="552"/>
        <end position="554"/>
    </location>
</feature>
<feature type="helix" evidence="39">
    <location>
        <begin position="556"/>
        <end position="561"/>
    </location>
</feature>
<feature type="helix" evidence="39">
    <location>
        <begin position="568"/>
        <end position="576"/>
    </location>
</feature>
<feature type="helix" evidence="39">
    <location>
        <begin position="583"/>
        <end position="600"/>
    </location>
</feature>
<feature type="helix" evidence="39">
    <location>
        <begin position="606"/>
        <end position="625"/>
    </location>
</feature>
<feature type="helix" evidence="40">
    <location>
        <begin position="657"/>
        <end position="671"/>
    </location>
</feature>
<feature type="helix" evidence="40">
    <location>
        <begin position="680"/>
        <end position="684"/>
    </location>
</feature>
<feature type="turn" evidence="40">
    <location>
        <begin position="690"/>
        <end position="692"/>
    </location>
</feature>
<feature type="helix" evidence="40">
    <location>
        <begin position="696"/>
        <end position="699"/>
    </location>
</feature>
<feature type="strand" evidence="35">
    <location>
        <begin position="700"/>
        <end position="702"/>
    </location>
</feature>
<feature type="helix" evidence="40">
    <location>
        <begin position="706"/>
        <end position="714"/>
    </location>
</feature>
<feature type="helix" evidence="40">
    <location>
        <begin position="721"/>
        <end position="738"/>
    </location>
</feature>
<feature type="helix" evidence="40">
    <location>
        <begin position="744"/>
        <end position="762"/>
    </location>
</feature>
<feature type="turn" evidence="40">
    <location>
        <begin position="763"/>
        <end position="765"/>
    </location>
</feature>
<feature type="helix" evidence="37">
    <location>
        <begin position="777"/>
        <end position="790"/>
    </location>
</feature>
<feature type="helix" evidence="37">
    <location>
        <begin position="800"/>
        <end position="804"/>
    </location>
</feature>
<feature type="helix" evidence="37">
    <location>
        <begin position="822"/>
        <end position="830"/>
    </location>
</feature>
<feature type="helix" evidence="37">
    <location>
        <begin position="837"/>
        <end position="854"/>
    </location>
</feature>
<feature type="helix" evidence="37">
    <location>
        <begin position="860"/>
        <end position="882"/>
    </location>
</feature>
<feature type="helix" evidence="37">
    <location>
        <begin position="889"/>
        <end position="892"/>
    </location>
</feature>
<feature type="helix" evidence="37">
    <location>
        <begin position="895"/>
        <end position="909"/>
    </location>
</feature>
<feature type="helix" evidence="37">
    <location>
        <begin position="910"/>
        <end position="913"/>
    </location>
</feature>
<feature type="strand" evidence="41">
    <location>
        <begin position="945"/>
        <end position="953"/>
    </location>
</feature>
<feature type="strand" evidence="41">
    <location>
        <begin position="956"/>
        <end position="959"/>
    </location>
</feature>
<feature type="strand" evidence="41">
    <location>
        <begin position="963"/>
        <end position="966"/>
    </location>
</feature>
<feature type="strand" evidence="41">
    <location>
        <begin position="969"/>
        <end position="972"/>
    </location>
</feature>
<feature type="strand" evidence="41">
    <location>
        <begin position="976"/>
        <end position="979"/>
    </location>
</feature>
<feature type="strand" evidence="41">
    <location>
        <begin position="982"/>
        <end position="986"/>
    </location>
</feature>
<feature type="strand" evidence="41">
    <location>
        <begin position="991"/>
        <end position="999"/>
    </location>
</feature>
<feature type="helix" evidence="41">
    <location>
        <begin position="1001"/>
        <end position="1003"/>
    </location>
</feature>
<feature type="strand" evidence="41">
    <location>
        <begin position="1011"/>
        <end position="1013"/>
    </location>
</feature>
<feature type="strand" evidence="41">
    <location>
        <begin position="1016"/>
        <end position="1027"/>
    </location>
</feature>
<feature type="helix" evidence="41">
    <location>
        <begin position="1028"/>
        <end position="1030"/>
    </location>
</feature>
<feature type="strand" evidence="41">
    <location>
        <begin position="1031"/>
        <end position="1039"/>
    </location>
</feature>
<feature type="helix" evidence="41">
    <location>
        <begin position="1040"/>
        <end position="1043"/>
    </location>
</feature>
<feature type="strand" evidence="41">
    <location>
        <begin position="1046"/>
        <end position="1048"/>
    </location>
</feature>
<feature type="helix" evidence="41">
    <location>
        <begin position="1053"/>
        <end position="1055"/>
    </location>
</feature>
<feature type="strand" evidence="41">
    <location>
        <begin position="1056"/>
        <end position="1064"/>
    </location>
</feature>
<feature type="turn" evidence="41">
    <location>
        <begin position="1065"/>
        <end position="1068"/>
    </location>
</feature>
<feature type="strand" evidence="41">
    <location>
        <begin position="1069"/>
        <end position="1072"/>
    </location>
</feature>
<feature type="strand" evidence="41">
    <location>
        <begin position="1085"/>
        <end position="1087"/>
    </location>
</feature>
<feature type="strand" evidence="41">
    <location>
        <begin position="1096"/>
        <end position="1098"/>
    </location>
</feature>
<feature type="helix" evidence="43">
    <location>
        <begin position="1602"/>
        <end position="1615"/>
    </location>
</feature>
<feature type="helix" evidence="43">
    <location>
        <begin position="1627"/>
        <end position="1632"/>
    </location>
</feature>
<feature type="helix" evidence="43">
    <location>
        <begin position="1643"/>
        <end position="1646"/>
    </location>
</feature>
<feature type="helix" evidence="43">
    <location>
        <begin position="1650"/>
        <end position="1652"/>
    </location>
</feature>
<feature type="helix" evidence="43">
    <location>
        <begin position="1663"/>
        <end position="1678"/>
    </location>
</feature>
<dbReference type="EMBL" id="AF197569">
    <property type="protein sequence ID" value="AAG34760.1"/>
    <property type="molecule type" value="mRNA"/>
</dbReference>
<dbReference type="EMBL" id="AF225870">
    <property type="protein sequence ID" value="AAG48939.1"/>
    <property type="molecule type" value="mRNA"/>
</dbReference>
<dbReference type="EMBL" id="AF225871">
    <property type="protein sequence ID" value="AAG48940.1"/>
    <property type="molecule type" value="mRNA"/>
</dbReference>
<dbReference type="EMBL" id="AF225872">
    <property type="protein sequence ID" value="AAG48941.1"/>
    <property type="molecule type" value="mRNA"/>
</dbReference>
<dbReference type="EMBL" id="AF177387">
    <property type="protein sequence ID" value="AAG48933.1"/>
    <property type="molecule type" value="mRNA"/>
</dbReference>
<dbReference type="EMBL" id="AY281068">
    <property type="protein sequence ID" value="AAP34197.1"/>
    <property type="molecule type" value="mRNA"/>
</dbReference>
<dbReference type="EMBL" id="BC115009">
    <property type="protein sequence ID" value="AAI15010.1"/>
    <property type="status" value="ALT_TERM"/>
    <property type="molecule type" value="mRNA"/>
</dbReference>
<dbReference type="EMBL" id="BC115010">
    <property type="protein sequence ID" value="AAI15011.1"/>
    <property type="status" value="ALT_INIT"/>
    <property type="molecule type" value="mRNA"/>
</dbReference>
<dbReference type="EMBL" id="BC115011">
    <property type="protein sequence ID" value="AAI15012.1"/>
    <property type="status" value="ALT_SEQ"/>
    <property type="molecule type" value="mRNA"/>
</dbReference>
<dbReference type="EMBL" id="BC129934">
    <property type="protein sequence ID" value="AAI29935.1"/>
    <property type="molecule type" value="mRNA"/>
</dbReference>
<dbReference type="EMBL" id="BC129935">
    <property type="protein sequence ID" value="AAI29936.1"/>
    <property type="molecule type" value="mRNA"/>
</dbReference>
<dbReference type="EMBL" id="AK056541">
    <property type="protein sequence ID" value="BAB71210.1"/>
    <property type="status" value="ALT_INIT"/>
    <property type="molecule type" value="mRNA"/>
</dbReference>
<dbReference type="CCDS" id="CCDS2859.1">
    <molecule id="Q86U86-3"/>
</dbReference>
<dbReference type="CCDS" id="CCDS2860.1">
    <molecule id="Q86U86-5"/>
</dbReference>
<dbReference type="CCDS" id="CCDS43099.1">
    <molecule id="Q86U86-4"/>
</dbReference>
<dbReference type="CCDS" id="CCDS87087.1">
    <molecule id="Q86U86-2"/>
</dbReference>
<dbReference type="CCDS" id="CCDS93285.1">
    <molecule id="Q86U86-9"/>
</dbReference>
<dbReference type="CCDS" id="CCDS93286.1">
    <molecule id="Q86U86-1"/>
</dbReference>
<dbReference type="RefSeq" id="NP_001337004.1">
    <molecule id="Q86U86-2"/>
    <property type="nucleotide sequence ID" value="NM_001350075.2"/>
</dbReference>
<dbReference type="RefSeq" id="NP_001381796.1">
    <molecule id="Q86U86-1"/>
    <property type="nucleotide sequence ID" value="NM_001394867.1"/>
</dbReference>
<dbReference type="RefSeq" id="NP_001381797.1">
    <molecule id="Q86U86-1"/>
    <property type="nucleotide sequence ID" value="NM_001394868.1"/>
</dbReference>
<dbReference type="RefSeq" id="NP_001381798.1">
    <molecule id="Q86U86-1"/>
    <property type="nucleotide sequence ID" value="NM_001394869.1"/>
</dbReference>
<dbReference type="RefSeq" id="NP_001381801.1">
    <molecule id="Q86U86-2"/>
    <property type="nucleotide sequence ID" value="NM_001394872.1"/>
</dbReference>
<dbReference type="RefSeq" id="NP_001381804.1">
    <molecule id="Q86U86-5"/>
    <property type="nucleotide sequence ID" value="NM_001394875.1"/>
</dbReference>
<dbReference type="RefSeq" id="NP_001387399.1">
    <molecule id="Q86U86-1"/>
    <property type="nucleotide sequence ID" value="NM_001400470.1"/>
</dbReference>
<dbReference type="RefSeq" id="NP_001387403.1">
    <molecule id="Q86U86-2"/>
    <property type="nucleotide sequence ID" value="NM_001400474.1"/>
</dbReference>
<dbReference type="RefSeq" id="NP_001387404.1">
    <molecule id="Q86U86-2"/>
    <property type="nucleotide sequence ID" value="NM_001400475.1"/>
</dbReference>
<dbReference type="RefSeq" id="NP_001387408.1">
    <molecule id="Q86U86-2"/>
    <property type="nucleotide sequence ID" value="NM_001400479.1"/>
</dbReference>
<dbReference type="RefSeq" id="NP_001387413.1">
    <molecule id="Q86U86-9"/>
    <property type="nucleotide sequence ID" value="NM_001400484.1"/>
</dbReference>
<dbReference type="RefSeq" id="NP_001387416.1">
    <molecule id="Q86U86-3"/>
    <property type="nucleotide sequence ID" value="NM_001400487.1"/>
</dbReference>
<dbReference type="RefSeq" id="NP_001387425.1">
    <molecule id="Q86U86-5"/>
    <property type="nucleotide sequence ID" value="NM_001400496.1"/>
</dbReference>
<dbReference type="RefSeq" id="NP_001387429.1">
    <molecule id="Q86U86-5"/>
    <property type="nucleotide sequence ID" value="NM_001400500.1"/>
</dbReference>
<dbReference type="RefSeq" id="NP_001387430.1">
    <molecule id="Q86U86-5"/>
    <property type="nucleotide sequence ID" value="NM_001400501.1"/>
</dbReference>
<dbReference type="RefSeq" id="NP_001392484.1">
    <molecule id="Q86U86-5"/>
    <property type="nucleotide sequence ID" value="NM_001405555.1"/>
</dbReference>
<dbReference type="RefSeq" id="NP_001392485.1">
    <molecule id="Q86U86-2"/>
    <property type="nucleotide sequence ID" value="NM_001405556.1"/>
</dbReference>
<dbReference type="RefSeq" id="NP_001392486.1">
    <molecule id="Q86U86-2"/>
    <property type="nucleotide sequence ID" value="NM_001405557.1"/>
</dbReference>
<dbReference type="RefSeq" id="NP_001392487.1">
    <molecule id="Q86U86-9"/>
    <property type="nucleotide sequence ID" value="NM_001405558.1"/>
</dbReference>
<dbReference type="RefSeq" id="NP_001392494.1">
    <molecule id="Q86U86-9"/>
    <property type="nucleotide sequence ID" value="NM_001405565.1"/>
</dbReference>
<dbReference type="RefSeq" id="NP_001392506.1">
    <molecule id="Q86U86-5"/>
    <property type="nucleotide sequence ID" value="NM_001405577.1"/>
</dbReference>
<dbReference type="RefSeq" id="NP_001392510.1">
    <molecule id="Q86U86-1"/>
    <property type="nucleotide sequence ID" value="NM_001405581.1"/>
</dbReference>
<dbReference type="RefSeq" id="NP_001392511.1">
    <molecule id="Q86U86-3"/>
    <property type="nucleotide sequence ID" value="NM_001405582.1"/>
</dbReference>
<dbReference type="RefSeq" id="NP_001392522.1">
    <molecule id="Q86U86-5"/>
    <property type="nucleotide sequence ID" value="NM_001405593.1"/>
</dbReference>
<dbReference type="RefSeq" id="NP_001392523.1">
    <molecule id="Q86U86-1"/>
    <property type="nucleotide sequence ID" value="NM_001405594.1"/>
</dbReference>
<dbReference type="RefSeq" id="NP_001392528.1">
    <molecule id="Q86U86-3"/>
    <property type="nucleotide sequence ID" value="NM_001405599.1"/>
</dbReference>
<dbReference type="RefSeq" id="NP_001392532.1">
    <molecule id="Q86U86-1"/>
    <property type="nucleotide sequence ID" value="NM_001405603.1"/>
</dbReference>
<dbReference type="RefSeq" id="NP_001392535.1">
    <molecule id="Q86U86-3"/>
    <property type="nucleotide sequence ID" value="NM_001405606.1"/>
</dbReference>
<dbReference type="RefSeq" id="NP_001392552.1">
    <molecule id="Q86U86-2"/>
    <property type="nucleotide sequence ID" value="NM_001405623.1"/>
</dbReference>
<dbReference type="RefSeq" id="NP_001392555.1">
    <molecule id="Q86U86-5"/>
    <property type="nucleotide sequence ID" value="NM_001405626.1"/>
</dbReference>
<dbReference type="RefSeq" id="NP_001392556.1">
    <molecule id="Q86U86-5"/>
    <property type="nucleotide sequence ID" value="NM_001405627.1"/>
</dbReference>
<dbReference type="RefSeq" id="NP_001392557.1">
    <molecule id="Q86U86-2"/>
    <property type="nucleotide sequence ID" value="NM_001405628.1"/>
</dbReference>
<dbReference type="RefSeq" id="NP_001392559.1">
    <molecule id="Q86U86-2"/>
    <property type="nucleotide sequence ID" value="NM_001405630.1"/>
</dbReference>
<dbReference type="RefSeq" id="NP_001392560.1">
    <molecule id="Q86U86-2"/>
    <property type="nucleotide sequence ID" value="NM_001405631.1"/>
</dbReference>
<dbReference type="RefSeq" id="NP_001392562.1">
    <molecule id="Q86U86-9"/>
    <property type="nucleotide sequence ID" value="NM_001405633.1"/>
</dbReference>
<dbReference type="RefSeq" id="NP_001392564.1">
    <molecule id="Q86U86-9"/>
    <property type="nucleotide sequence ID" value="NM_001405635.1"/>
</dbReference>
<dbReference type="RefSeq" id="NP_001392567.1">
    <molecule id="Q86U86-3"/>
    <property type="nucleotide sequence ID" value="NM_001405638.1"/>
</dbReference>
<dbReference type="RefSeq" id="NP_001392569.1">
    <molecule id="Q86U86-5"/>
    <property type="nucleotide sequence ID" value="NM_001405640.1"/>
</dbReference>
<dbReference type="RefSeq" id="NP_060783.3">
    <molecule id="Q86U86-4"/>
    <property type="nucleotide sequence ID" value="NM_018313.4"/>
</dbReference>
<dbReference type="RefSeq" id="NP_851385.1">
    <molecule id="Q86U86-5"/>
    <property type="nucleotide sequence ID" value="NM_181042.5"/>
</dbReference>
<dbReference type="RefSeq" id="XP_016862237.1">
    <property type="nucleotide sequence ID" value="XM_017006748.1"/>
</dbReference>
<dbReference type="RefSeq" id="XP_016862238.1">
    <property type="nucleotide sequence ID" value="XM_017006749.1"/>
</dbReference>
<dbReference type="RefSeq" id="XP_016862239.1">
    <property type="nucleotide sequence ID" value="XM_017006750.1"/>
</dbReference>
<dbReference type="RefSeq" id="XP_016862246.1">
    <property type="nucleotide sequence ID" value="XM_017006757.1"/>
</dbReference>
<dbReference type="RefSeq" id="XP_016862247.1">
    <property type="nucleotide sequence ID" value="XM_017006758.1"/>
</dbReference>
<dbReference type="PDB" id="2KTB">
    <property type="method" value="NMR"/>
    <property type="chains" value="B=174-293"/>
</dbReference>
<dbReference type="PDB" id="3G0J">
    <property type="method" value="X-ray"/>
    <property type="resolution" value="1.78 A"/>
    <property type="chains" value="A/B=645-766"/>
</dbReference>
<dbReference type="PDB" id="3HMF">
    <property type="method" value="X-ray"/>
    <property type="resolution" value="1.63 A"/>
    <property type="chains" value="A=178-291"/>
</dbReference>
<dbReference type="PDB" id="3IU5">
    <property type="method" value="X-ray"/>
    <property type="resolution" value="1.63 A"/>
    <property type="chains" value="A=43-154"/>
</dbReference>
<dbReference type="PDB" id="3IU6">
    <property type="method" value="X-ray"/>
    <property type="resolution" value="1.79 A"/>
    <property type="chains" value="A=773-914"/>
</dbReference>
<dbReference type="PDB" id="3K2J">
    <property type="method" value="X-ray"/>
    <property type="resolution" value="2.20 A"/>
    <property type="chains" value="A/B=388-494"/>
</dbReference>
<dbReference type="PDB" id="3LJW">
    <property type="method" value="X-ray"/>
    <property type="resolution" value="1.50 A"/>
    <property type="chains" value="A/B=174-293"/>
</dbReference>
<dbReference type="PDB" id="3MB4">
    <property type="method" value="X-ray"/>
    <property type="resolution" value="1.66 A"/>
    <property type="chains" value="A/B=645-766"/>
</dbReference>
<dbReference type="PDB" id="3TLP">
    <property type="method" value="X-ray"/>
    <property type="resolution" value="2.13 A"/>
    <property type="chains" value="A/B=496-637"/>
</dbReference>
<dbReference type="PDB" id="4Q0N">
    <property type="method" value="X-ray"/>
    <property type="resolution" value="1.78 A"/>
    <property type="chains" value="A/B/C/D/E/F/G/H=645-766"/>
</dbReference>
<dbReference type="PDB" id="4Q0O">
    <property type="method" value="X-ray"/>
    <property type="resolution" value="1.83 A"/>
    <property type="chains" value="A=645-766"/>
</dbReference>
<dbReference type="PDB" id="4Y03">
    <property type="method" value="X-ray"/>
    <property type="resolution" value="1.94 A"/>
    <property type="chains" value="A/B=645-766"/>
</dbReference>
<dbReference type="PDB" id="5E7D">
    <property type="method" value="X-ray"/>
    <property type="resolution" value="1.87 A"/>
    <property type="chains" value="A/B/C/D=645-766"/>
</dbReference>
<dbReference type="PDB" id="5FH6">
    <property type="method" value="X-ray"/>
    <property type="resolution" value="2.30 A"/>
    <property type="chains" value="A/B/C/D=645-766"/>
</dbReference>
<dbReference type="PDB" id="5FH7">
    <property type="method" value="X-ray"/>
    <property type="resolution" value="1.47 A"/>
    <property type="chains" value="A/B=645-766"/>
</dbReference>
<dbReference type="PDB" id="5FH8">
    <property type="method" value="X-ray"/>
    <property type="resolution" value="1.55 A"/>
    <property type="chains" value="A/B/C/D=645-766"/>
</dbReference>
<dbReference type="PDB" id="5HRV">
    <property type="method" value="X-ray"/>
    <property type="resolution" value="1.70 A"/>
    <property type="chains" value="A=645-766"/>
</dbReference>
<dbReference type="PDB" id="5HRW">
    <property type="method" value="X-ray"/>
    <property type="resolution" value="1.80 A"/>
    <property type="chains" value="A/B=645-766"/>
</dbReference>
<dbReference type="PDB" id="5HRX">
    <property type="method" value="X-ray"/>
    <property type="resolution" value="1.73 A"/>
    <property type="chains" value="A/B=645-766"/>
</dbReference>
<dbReference type="PDB" id="5II1">
    <property type="method" value="X-ray"/>
    <property type="resolution" value="2.02 A"/>
    <property type="chains" value="A/B=645-766"/>
</dbReference>
<dbReference type="PDB" id="5II2">
    <property type="method" value="X-ray"/>
    <property type="resolution" value="2.10 A"/>
    <property type="chains" value="A/B=645-766"/>
</dbReference>
<dbReference type="PDB" id="5IID">
    <property type="method" value="X-ray"/>
    <property type="resolution" value="2.40 A"/>
    <property type="chains" value="A/B=645-766"/>
</dbReference>
<dbReference type="PDB" id="6OXB">
    <property type="method" value="X-ray"/>
    <property type="resolution" value="1.86 A"/>
    <property type="chains" value="A/B/C/D/E/F=934-1105"/>
</dbReference>
<dbReference type="PDB" id="6ZN6">
    <property type="method" value="X-ray"/>
    <property type="resolution" value="2.02 A"/>
    <property type="chains" value="A/B=178-291"/>
</dbReference>
<dbReference type="PDB" id="6ZNV">
    <property type="method" value="X-ray"/>
    <property type="resolution" value="1.14 A"/>
    <property type="chains" value="A=178-291"/>
</dbReference>
<dbReference type="PDB" id="6ZS3">
    <property type="method" value="X-ray"/>
    <property type="resolution" value="1.67 A"/>
    <property type="chains" value="A/B=645-766"/>
</dbReference>
<dbReference type="PDB" id="6ZS4">
    <property type="method" value="X-ray"/>
    <property type="resolution" value="2.00 A"/>
    <property type="chains" value="A=645-766"/>
</dbReference>
<dbReference type="PDB" id="7VDV">
    <property type="method" value="EM"/>
    <property type="resolution" value="3.40 A"/>
    <property type="chains" value="a=631-1689"/>
</dbReference>
<dbReference type="PDB" id="7Y8R">
    <property type="method" value="EM"/>
    <property type="resolution" value="4.40 A"/>
    <property type="chains" value="U=1-1689"/>
</dbReference>
<dbReference type="PDB" id="8FTA">
    <property type="method" value="X-ray"/>
    <property type="resolution" value="1.78 A"/>
    <property type="chains" value="A=178-291"/>
</dbReference>
<dbReference type="PDBsum" id="2KTB"/>
<dbReference type="PDBsum" id="3G0J"/>
<dbReference type="PDBsum" id="3HMF"/>
<dbReference type="PDBsum" id="3IU5"/>
<dbReference type="PDBsum" id="3IU6"/>
<dbReference type="PDBsum" id="3K2J"/>
<dbReference type="PDBsum" id="3LJW"/>
<dbReference type="PDBsum" id="3MB4"/>
<dbReference type="PDBsum" id="3TLP"/>
<dbReference type="PDBsum" id="4Q0N"/>
<dbReference type="PDBsum" id="4Q0O"/>
<dbReference type="PDBsum" id="4Y03"/>
<dbReference type="PDBsum" id="5E7D"/>
<dbReference type="PDBsum" id="5FH6"/>
<dbReference type="PDBsum" id="5FH7"/>
<dbReference type="PDBsum" id="5FH8"/>
<dbReference type="PDBsum" id="5HRV"/>
<dbReference type="PDBsum" id="5HRW"/>
<dbReference type="PDBsum" id="5HRX"/>
<dbReference type="PDBsum" id="5II1"/>
<dbReference type="PDBsum" id="5II2"/>
<dbReference type="PDBsum" id="5IID"/>
<dbReference type="PDBsum" id="6OXB"/>
<dbReference type="PDBsum" id="6ZN6"/>
<dbReference type="PDBsum" id="6ZNV"/>
<dbReference type="PDBsum" id="6ZS3"/>
<dbReference type="PDBsum" id="6ZS4"/>
<dbReference type="PDBsum" id="7VDV"/>
<dbReference type="PDBsum" id="7Y8R"/>
<dbReference type="PDBsum" id="8FTA"/>
<dbReference type="EMDB" id="EMD-31926"/>
<dbReference type="EMDB" id="EMD-33684"/>
<dbReference type="SMR" id="Q86U86"/>
<dbReference type="BioGRID" id="120490">
    <property type="interactions" value="260"/>
</dbReference>
<dbReference type="ComplexPortal" id="CPX-1196">
    <property type="entry name" value="Polybromo-associated SWI/SNF ATP-dependent chromatin remodeling complex, ACTL6B variant"/>
</dbReference>
<dbReference type="ComplexPortal" id="CPX-1199">
    <property type="entry name" value="Polybromo-associated SWI/SNF ATP-dependent chromatin remodeling complex, ACTL6A variant"/>
</dbReference>
<dbReference type="CORUM" id="Q86U86"/>
<dbReference type="DIP" id="DIP-33045N"/>
<dbReference type="FunCoup" id="Q86U86">
    <property type="interactions" value="4337"/>
</dbReference>
<dbReference type="IntAct" id="Q86U86">
    <property type="interactions" value="130"/>
</dbReference>
<dbReference type="MINT" id="Q86U86"/>
<dbReference type="STRING" id="9606.ENSP00000386593"/>
<dbReference type="BindingDB" id="Q86U86"/>
<dbReference type="ChEMBL" id="CHEMBL1795184"/>
<dbReference type="GuidetoPHARMACOLOGY" id="2738"/>
<dbReference type="GlyGen" id="Q86U86">
    <property type="glycosylation" value="4 sites, 1 O-linked glycan (3 sites)"/>
</dbReference>
<dbReference type="iPTMnet" id="Q86U86"/>
<dbReference type="MetOSite" id="Q86U86"/>
<dbReference type="PhosphoSitePlus" id="Q86U86"/>
<dbReference type="SwissPalm" id="Q86U86"/>
<dbReference type="BioMuta" id="PBRM1"/>
<dbReference type="DMDM" id="73921624"/>
<dbReference type="CPTAC" id="CPTAC-1362"/>
<dbReference type="jPOST" id="Q86U86"/>
<dbReference type="MassIVE" id="Q86U86"/>
<dbReference type="PaxDb" id="9606-ENSP00000378307"/>
<dbReference type="PeptideAtlas" id="Q86U86"/>
<dbReference type="ProteomicsDB" id="69774">
    <molecule id="Q86U86-1"/>
</dbReference>
<dbReference type="ProteomicsDB" id="69775">
    <molecule id="Q86U86-2"/>
</dbReference>
<dbReference type="ProteomicsDB" id="69776">
    <molecule id="Q86U86-3"/>
</dbReference>
<dbReference type="ProteomicsDB" id="69777">
    <molecule id="Q86U86-4"/>
</dbReference>
<dbReference type="ProteomicsDB" id="69778">
    <molecule id="Q86U86-5"/>
</dbReference>
<dbReference type="ProteomicsDB" id="69779">
    <molecule id="Q86U86-6"/>
</dbReference>
<dbReference type="ProteomicsDB" id="69780">
    <molecule id="Q86U86-7"/>
</dbReference>
<dbReference type="ProteomicsDB" id="69781">
    <molecule id="Q86U86-8"/>
</dbReference>
<dbReference type="ProteomicsDB" id="69782">
    <molecule id="Q86U86-9"/>
</dbReference>
<dbReference type="Pumba" id="Q86U86"/>
<dbReference type="ABCD" id="Q86U86">
    <property type="antibodies" value="1 sequenced antibody"/>
</dbReference>
<dbReference type="Antibodypedia" id="2905">
    <property type="antibodies" value="195 antibodies from 29 providers"/>
</dbReference>
<dbReference type="DNASU" id="55193"/>
<dbReference type="Ensembl" id="ENST00000296302.11">
    <molecule id="Q86U86-1"/>
    <property type="protein sequence ID" value="ENSP00000296302.7"/>
    <property type="gene ID" value="ENSG00000163939.19"/>
</dbReference>
<dbReference type="Ensembl" id="ENST00000337303.8">
    <molecule id="Q86U86-5"/>
    <property type="protein sequence ID" value="ENSP00000338302.4"/>
    <property type="gene ID" value="ENSG00000163939.19"/>
</dbReference>
<dbReference type="Ensembl" id="ENST00000356770.8">
    <molecule id="Q86U86-3"/>
    <property type="protein sequence ID" value="ENSP00000349213.4"/>
    <property type="gene ID" value="ENSG00000163939.19"/>
</dbReference>
<dbReference type="Ensembl" id="ENST00000394830.7">
    <molecule id="Q86U86-4"/>
    <property type="protein sequence ID" value="ENSP00000378307.3"/>
    <property type="gene ID" value="ENSG00000163939.19"/>
</dbReference>
<dbReference type="Ensembl" id="ENST00000409057.5">
    <molecule id="Q86U86-2"/>
    <property type="protein sequence ID" value="ENSP00000386593.1"/>
    <property type="gene ID" value="ENSG00000163939.19"/>
</dbReference>
<dbReference type="Ensembl" id="ENST00000409114.7">
    <molecule id="Q86U86-8"/>
    <property type="protein sequence ID" value="ENSP00000386643.3"/>
    <property type="gene ID" value="ENSG00000163939.19"/>
</dbReference>
<dbReference type="Ensembl" id="ENST00000409767.5">
    <molecule id="Q86U86-7"/>
    <property type="protein sequence ID" value="ENSP00000386601.1"/>
    <property type="gene ID" value="ENSG00000163939.19"/>
</dbReference>
<dbReference type="Ensembl" id="ENST00000410007.5">
    <molecule id="Q86U86-9"/>
    <property type="protein sequence ID" value="ENSP00000386529.1"/>
    <property type="gene ID" value="ENSG00000163939.19"/>
</dbReference>
<dbReference type="Ensembl" id="ENST00000412587.5">
    <molecule id="Q86U86-6"/>
    <property type="protein sequence ID" value="ENSP00000404579.1"/>
    <property type="gene ID" value="ENSG00000163939.19"/>
</dbReference>
<dbReference type="GeneID" id="55193"/>
<dbReference type="KEGG" id="hsa:55193"/>
<dbReference type="UCSC" id="uc003deq.3">
    <molecule id="Q86U86-1"/>
    <property type="organism name" value="human"/>
</dbReference>
<dbReference type="AGR" id="HGNC:30064"/>
<dbReference type="CTD" id="55193"/>
<dbReference type="DisGeNET" id="55193"/>
<dbReference type="GeneCards" id="PBRM1"/>
<dbReference type="HGNC" id="HGNC:30064">
    <property type="gene designation" value="PBRM1"/>
</dbReference>
<dbReference type="HPA" id="ENSG00000163939">
    <property type="expression patterns" value="Low tissue specificity"/>
</dbReference>
<dbReference type="MalaCards" id="PBRM1"/>
<dbReference type="MIM" id="144700">
    <property type="type" value="phenotype"/>
</dbReference>
<dbReference type="MIM" id="606083">
    <property type="type" value="gene"/>
</dbReference>
<dbReference type="neXtProt" id="NX_Q86U86"/>
<dbReference type="OpenTargets" id="ENSG00000163939"/>
<dbReference type="Orphanet" id="404511">
    <property type="disease" value="Clear cell papillary renal cell carcinoma"/>
</dbReference>
<dbReference type="PharmGKB" id="PA162398846"/>
<dbReference type="VEuPathDB" id="HostDB:ENSG00000163939"/>
<dbReference type="eggNOG" id="KOG1827">
    <property type="taxonomic scope" value="Eukaryota"/>
</dbReference>
<dbReference type="GeneTree" id="ENSGT00390000003017"/>
<dbReference type="HOGENOM" id="CLU_001483_1_0_1"/>
<dbReference type="InParanoid" id="Q86U86"/>
<dbReference type="OMA" id="WQFYETL"/>
<dbReference type="OrthoDB" id="10009055at2759"/>
<dbReference type="PAN-GO" id="Q86U86">
    <property type="GO annotations" value="2 GO annotations based on evolutionary models"/>
</dbReference>
<dbReference type="PhylomeDB" id="Q86U86"/>
<dbReference type="TreeFam" id="TF106120"/>
<dbReference type="PathwayCommons" id="Q86U86"/>
<dbReference type="Reactome" id="R-HSA-3214858">
    <property type="pathway name" value="RMTs methylate histone arginines"/>
</dbReference>
<dbReference type="Reactome" id="R-HSA-8939243">
    <property type="pathway name" value="RUNX1 interacts with co-factors whose precise effect on RUNX1 targets is not known"/>
</dbReference>
<dbReference type="SignaLink" id="Q86U86"/>
<dbReference type="SIGNOR" id="Q86U86"/>
<dbReference type="BioGRID-ORCS" id="55193">
    <property type="hits" value="56 hits in 1215 CRISPR screens"/>
</dbReference>
<dbReference type="ChiTaRS" id="PBRM1">
    <property type="organism name" value="human"/>
</dbReference>
<dbReference type="EvolutionaryTrace" id="Q86U86"/>
<dbReference type="GeneWiki" id="PBRM1"/>
<dbReference type="GenomeRNAi" id="55193"/>
<dbReference type="Pharos" id="Q86U86">
    <property type="development level" value="Tchem"/>
</dbReference>
<dbReference type="PRO" id="PR:Q86U86"/>
<dbReference type="Proteomes" id="UP000005640">
    <property type="component" value="Chromosome 3"/>
</dbReference>
<dbReference type="RNAct" id="Q86U86">
    <property type="molecule type" value="protein"/>
</dbReference>
<dbReference type="Bgee" id="ENSG00000163939">
    <property type="expression patterns" value="Expressed in cortical plate and 217 other cell types or tissues"/>
</dbReference>
<dbReference type="ExpressionAtlas" id="Q86U86">
    <property type="expression patterns" value="baseline and differential"/>
</dbReference>
<dbReference type="GO" id="GO:0000785">
    <property type="term" value="C:chromatin"/>
    <property type="evidence" value="ECO:0000303"/>
    <property type="project" value="ComplexPortal"/>
</dbReference>
<dbReference type="GO" id="GO:0000776">
    <property type="term" value="C:kinetochore"/>
    <property type="evidence" value="ECO:0000303"/>
    <property type="project" value="ComplexPortal"/>
</dbReference>
<dbReference type="GO" id="GO:0000228">
    <property type="term" value="C:nuclear chromosome"/>
    <property type="evidence" value="ECO:0000303"/>
    <property type="project" value="UniProtKB"/>
</dbReference>
<dbReference type="GO" id="GO:0016363">
    <property type="term" value="C:nuclear matrix"/>
    <property type="evidence" value="ECO:0000303"/>
    <property type="project" value="ComplexPortal"/>
</dbReference>
<dbReference type="GO" id="GO:0005654">
    <property type="term" value="C:nucleoplasm"/>
    <property type="evidence" value="ECO:0000314"/>
    <property type="project" value="HPA"/>
</dbReference>
<dbReference type="GO" id="GO:0005634">
    <property type="term" value="C:nucleus"/>
    <property type="evidence" value="ECO:0000314"/>
    <property type="project" value="UniProtKB"/>
</dbReference>
<dbReference type="GO" id="GO:0016586">
    <property type="term" value="C:RSC-type complex"/>
    <property type="evidence" value="ECO:0000318"/>
    <property type="project" value="GO_Central"/>
</dbReference>
<dbReference type="GO" id="GO:0016514">
    <property type="term" value="C:SWI/SNF complex"/>
    <property type="evidence" value="ECO:0000314"/>
    <property type="project" value="BHF-UCL"/>
</dbReference>
<dbReference type="GO" id="GO:0003682">
    <property type="term" value="F:chromatin binding"/>
    <property type="evidence" value="ECO:0000318"/>
    <property type="project" value="GO_Central"/>
</dbReference>
<dbReference type="GO" id="GO:0003677">
    <property type="term" value="F:DNA binding"/>
    <property type="evidence" value="ECO:0007669"/>
    <property type="project" value="UniProtKB-KW"/>
</dbReference>
<dbReference type="GO" id="GO:0006338">
    <property type="term" value="P:chromatin remodeling"/>
    <property type="evidence" value="ECO:0000318"/>
    <property type="project" value="GO_Central"/>
</dbReference>
<dbReference type="GO" id="GO:0000278">
    <property type="term" value="P:mitotic cell cycle"/>
    <property type="evidence" value="ECO:0000304"/>
    <property type="project" value="UniProtKB"/>
</dbReference>
<dbReference type="GO" id="GO:0008285">
    <property type="term" value="P:negative regulation of cell population proliferation"/>
    <property type="evidence" value="ECO:0000315"/>
    <property type="project" value="UniProtKB"/>
</dbReference>
<dbReference type="GO" id="GO:0045597">
    <property type="term" value="P:positive regulation of cell differentiation"/>
    <property type="evidence" value="ECO:0000303"/>
    <property type="project" value="ComplexPortal"/>
</dbReference>
<dbReference type="GO" id="GO:2000781">
    <property type="term" value="P:positive regulation of double-strand break repair"/>
    <property type="evidence" value="ECO:0000303"/>
    <property type="project" value="ComplexPortal"/>
</dbReference>
<dbReference type="GO" id="GO:0045663">
    <property type="term" value="P:positive regulation of myoblast differentiation"/>
    <property type="evidence" value="ECO:0000303"/>
    <property type="project" value="ComplexPortal"/>
</dbReference>
<dbReference type="GO" id="GO:0045582">
    <property type="term" value="P:positive regulation of T cell differentiation"/>
    <property type="evidence" value="ECO:0000303"/>
    <property type="project" value="ComplexPortal"/>
</dbReference>
<dbReference type="GO" id="GO:0070316">
    <property type="term" value="P:regulation of G0 to G1 transition"/>
    <property type="evidence" value="ECO:0000303"/>
    <property type="project" value="ComplexPortal"/>
</dbReference>
<dbReference type="GO" id="GO:2000045">
    <property type="term" value="P:regulation of G1/S transition of mitotic cell cycle"/>
    <property type="evidence" value="ECO:0000303"/>
    <property type="project" value="ComplexPortal"/>
</dbReference>
<dbReference type="GO" id="GO:0030071">
    <property type="term" value="P:regulation of mitotic metaphase/anaphase transition"/>
    <property type="evidence" value="ECO:0000303"/>
    <property type="project" value="ComplexPortal"/>
</dbReference>
<dbReference type="GO" id="GO:2000819">
    <property type="term" value="P:regulation of nucleotide-excision repair"/>
    <property type="evidence" value="ECO:0000303"/>
    <property type="project" value="ComplexPortal"/>
</dbReference>
<dbReference type="GO" id="GO:0006357">
    <property type="term" value="P:regulation of transcription by RNA polymerase II"/>
    <property type="evidence" value="ECO:0000303"/>
    <property type="project" value="ComplexPortal"/>
</dbReference>
<dbReference type="GO" id="GO:0006368">
    <property type="term" value="P:transcription elongation by RNA polymerase II"/>
    <property type="evidence" value="ECO:0000318"/>
    <property type="project" value="GO_Central"/>
</dbReference>
<dbReference type="CDD" id="cd04717">
    <property type="entry name" value="BAH_polybromo"/>
    <property type="match status" value="2"/>
</dbReference>
<dbReference type="CDD" id="cd05524">
    <property type="entry name" value="Bromo_polybromo_I"/>
    <property type="match status" value="1"/>
</dbReference>
<dbReference type="CDD" id="cd05517">
    <property type="entry name" value="Bromo_polybromo_II"/>
    <property type="match status" value="1"/>
</dbReference>
<dbReference type="CDD" id="cd05520">
    <property type="entry name" value="Bromo_polybromo_III"/>
    <property type="match status" value="1"/>
</dbReference>
<dbReference type="CDD" id="cd05518">
    <property type="entry name" value="Bromo_polybromo_IV"/>
    <property type="match status" value="1"/>
</dbReference>
<dbReference type="CDD" id="cd05515">
    <property type="entry name" value="Bromo_polybromo_V"/>
    <property type="match status" value="1"/>
</dbReference>
<dbReference type="CDD" id="cd05526">
    <property type="entry name" value="Bromo_polybromo_VI"/>
    <property type="match status" value="1"/>
</dbReference>
<dbReference type="CDD" id="cd21984">
    <property type="entry name" value="HMG-box_PB1"/>
    <property type="match status" value="1"/>
</dbReference>
<dbReference type="FunFam" id="1.20.920.10:FF:000009">
    <property type="entry name" value="Protein polybromo-1 isoform 1"/>
    <property type="match status" value="1"/>
</dbReference>
<dbReference type="FunFam" id="1.20.920.10:FF:000011">
    <property type="entry name" value="Protein polybromo-1 isoform 1"/>
    <property type="match status" value="1"/>
</dbReference>
<dbReference type="FunFam" id="1.20.920.10:FF:000013">
    <property type="entry name" value="Protein polybromo-1 isoform 1"/>
    <property type="match status" value="1"/>
</dbReference>
<dbReference type="FunFam" id="1.20.920.10:FF:000006">
    <property type="entry name" value="protein polybromo-1 isoform X1"/>
    <property type="match status" value="1"/>
</dbReference>
<dbReference type="FunFam" id="1.20.920.10:FF:000010">
    <property type="entry name" value="protein polybromo-1 isoform X3"/>
    <property type="match status" value="1"/>
</dbReference>
<dbReference type="FunFam" id="1.20.920.10:FF:000015">
    <property type="entry name" value="protein polybromo-1 isoform X3"/>
    <property type="match status" value="1"/>
</dbReference>
<dbReference type="FunFam" id="2.30.30.490:FF:000002">
    <property type="entry name" value="protein polybromo-1 isoform X3"/>
    <property type="match status" value="1"/>
</dbReference>
<dbReference type="FunFam" id="2.30.30.490:FF:000003">
    <property type="entry name" value="protein polybromo-1 isoform X3"/>
    <property type="match status" value="1"/>
</dbReference>
<dbReference type="Gene3D" id="2.30.30.490">
    <property type="match status" value="2"/>
</dbReference>
<dbReference type="Gene3D" id="1.20.920.10">
    <property type="entry name" value="Bromodomain-like"/>
    <property type="match status" value="6"/>
</dbReference>
<dbReference type="InterPro" id="IPR001025">
    <property type="entry name" value="BAH_dom"/>
</dbReference>
<dbReference type="InterPro" id="IPR043151">
    <property type="entry name" value="BAH_sf"/>
</dbReference>
<dbReference type="InterPro" id="IPR001487">
    <property type="entry name" value="Bromodomain"/>
</dbReference>
<dbReference type="InterPro" id="IPR036427">
    <property type="entry name" value="Bromodomain-like_sf"/>
</dbReference>
<dbReference type="InterPro" id="IPR018359">
    <property type="entry name" value="Bromodomain_CS"/>
</dbReference>
<dbReference type="InterPro" id="IPR009071">
    <property type="entry name" value="HMG_box_dom"/>
</dbReference>
<dbReference type="InterPro" id="IPR036910">
    <property type="entry name" value="HMG_box_dom_sf"/>
</dbReference>
<dbReference type="InterPro" id="IPR037968">
    <property type="entry name" value="PBRM1_BD5"/>
</dbReference>
<dbReference type="InterPro" id="IPR037382">
    <property type="entry name" value="Rsc/polybromo"/>
</dbReference>
<dbReference type="PANTHER" id="PTHR16062:SF19">
    <property type="entry name" value="PROTEIN POLYBROMO-1"/>
    <property type="match status" value="1"/>
</dbReference>
<dbReference type="PANTHER" id="PTHR16062">
    <property type="entry name" value="SWI/SNF-RELATED"/>
    <property type="match status" value="1"/>
</dbReference>
<dbReference type="Pfam" id="PF01426">
    <property type="entry name" value="BAH"/>
    <property type="match status" value="2"/>
</dbReference>
<dbReference type="Pfam" id="PF00439">
    <property type="entry name" value="Bromodomain"/>
    <property type="match status" value="6"/>
</dbReference>
<dbReference type="Pfam" id="PF00505">
    <property type="entry name" value="HMG_box"/>
    <property type="match status" value="1"/>
</dbReference>
<dbReference type="PRINTS" id="PR00503">
    <property type="entry name" value="BROMODOMAIN"/>
</dbReference>
<dbReference type="SMART" id="SM00439">
    <property type="entry name" value="BAH"/>
    <property type="match status" value="2"/>
</dbReference>
<dbReference type="SMART" id="SM00297">
    <property type="entry name" value="BROMO"/>
    <property type="match status" value="6"/>
</dbReference>
<dbReference type="SMART" id="SM00398">
    <property type="entry name" value="HMG"/>
    <property type="match status" value="1"/>
</dbReference>
<dbReference type="SUPFAM" id="SSF47370">
    <property type="entry name" value="Bromodomain"/>
    <property type="match status" value="6"/>
</dbReference>
<dbReference type="SUPFAM" id="SSF47095">
    <property type="entry name" value="HMG-box"/>
    <property type="match status" value="1"/>
</dbReference>
<dbReference type="PROSITE" id="PS51038">
    <property type="entry name" value="BAH"/>
    <property type="match status" value="2"/>
</dbReference>
<dbReference type="PROSITE" id="PS00633">
    <property type="entry name" value="BROMODOMAIN_1"/>
    <property type="match status" value="5"/>
</dbReference>
<dbReference type="PROSITE" id="PS50014">
    <property type="entry name" value="BROMODOMAIN_2"/>
    <property type="match status" value="6"/>
</dbReference>
<dbReference type="PROSITE" id="PS50118">
    <property type="entry name" value="HMG_BOX_2"/>
    <property type="match status" value="1"/>
</dbReference>
<accession>Q86U86</accession>
<accession>A1L381</accession>
<accession>A1L382</accession>
<accession>A4FUJ7</accession>
<accession>Q1RMD1</accession>
<accession>Q1RMD2</accession>
<accession>Q96MS2</accession>
<accession>Q9H2T3</accession>
<accession>Q9H2T4</accession>
<accession>Q9H2T5</accession>
<accession>Q9H301</accession>
<accession>Q9H314</accession>
<keyword id="KW-0002">3D-structure</keyword>
<keyword id="KW-0007">Acetylation</keyword>
<keyword id="KW-0025">Alternative splicing</keyword>
<keyword id="KW-0103">Bromodomain</keyword>
<keyword id="KW-0156">Chromatin regulator</keyword>
<keyword id="KW-0238">DNA-binding</keyword>
<keyword id="KW-1017">Isopeptide bond</keyword>
<keyword id="KW-0539">Nucleus</keyword>
<keyword id="KW-0597">Phosphoprotein</keyword>
<keyword id="KW-1267">Proteomics identification</keyword>
<keyword id="KW-1185">Reference proteome</keyword>
<keyword id="KW-0677">Repeat</keyword>
<keyword id="KW-0804">Transcription</keyword>
<keyword id="KW-0805">Transcription regulation</keyword>
<keyword id="KW-0043">Tumor suppressor</keyword>
<keyword id="KW-0832">Ubl conjugation</keyword>
<proteinExistence type="evidence at protein level"/>
<reference key="1">
    <citation type="journal article" date="2000" name="Proc. Natl. Acad. Sci. U.S.A.">
        <title>The human SWI/SNF-B chromatin-remodeling complex is related to yeast rsc and localizes at kinetochores of mitotic chromosomes.</title>
        <authorList>
            <person name="Xue Y."/>
            <person name="Canman J.C."/>
            <person name="Lee C.S."/>
            <person name="Nie Z."/>
            <person name="Yang D."/>
            <person name="Moreno G.T."/>
            <person name="Young M.K."/>
            <person name="Salmon E.D."/>
            <person name="Wang W."/>
        </authorList>
    </citation>
    <scope>NUCLEOTIDE SEQUENCE [MRNA] (ISOFORM 4)</scope>
    <scope>IDENTIFICATION BY MASS SPECTROMETRY</scope>
    <scope>IDENTIFICATION IN THE PBAF COMPLEX</scope>
</reference>
<reference key="2">
    <citation type="journal article" date="2002" name="DNA Seq.">
        <title>cDNA cloning of the human polybromo-1 gene on chromosome 3p21.</title>
        <authorList>
            <person name="Horikawa I."/>
            <person name="Barrett J.C."/>
        </authorList>
    </citation>
    <scope>NUCLEOTIDE SEQUENCE [MRNA] (ISOFORMS 2; 3; 5 AND 6)</scope>
    <scope>TISSUE SPECIFICITY</scope>
</reference>
<reference key="3">
    <citation type="journal article" date="2005" name="Oncogene">
        <title>The 3p21 candidate tumor suppressor gene BAF180 is normally expressed in human lung cancer.</title>
        <authorList>
            <person name="Sekine I."/>
            <person name="Sato M."/>
            <person name="Sunaga N."/>
            <person name="Toyooka S."/>
            <person name="Peyton M."/>
            <person name="Parsons R."/>
            <person name="Wang W."/>
            <person name="Gazdar A.F."/>
            <person name="Minna J.D."/>
        </authorList>
    </citation>
    <scope>NUCLEOTIDE SEQUENCE [MRNA] (ISOFORM 1)</scope>
</reference>
<reference key="4">
    <citation type="journal article" date="2004" name="Genome Res.">
        <title>The status, quality, and expansion of the NIH full-length cDNA project: the Mammalian Gene Collection (MGC).</title>
        <authorList>
            <consortium name="The MGC Project Team"/>
        </authorList>
    </citation>
    <scope>NUCLEOTIDE SEQUENCE [LARGE SCALE MRNA] (ISOFORMS 2; 4; 7; 8 AND 9)</scope>
</reference>
<reference key="5">
    <citation type="journal article" date="2004" name="Nat. Genet.">
        <title>Complete sequencing and characterization of 21,243 full-length human cDNAs.</title>
        <authorList>
            <person name="Ota T."/>
            <person name="Suzuki Y."/>
            <person name="Nishikawa T."/>
            <person name="Otsuki T."/>
            <person name="Sugiyama T."/>
            <person name="Irie R."/>
            <person name="Wakamatsu A."/>
            <person name="Hayashi K."/>
            <person name="Sato H."/>
            <person name="Nagai K."/>
            <person name="Kimura K."/>
            <person name="Makita H."/>
            <person name="Sekine M."/>
            <person name="Obayashi M."/>
            <person name="Nishi T."/>
            <person name="Shibahara T."/>
            <person name="Tanaka T."/>
            <person name="Ishii S."/>
            <person name="Yamamoto J."/>
            <person name="Saito K."/>
            <person name="Kawai Y."/>
            <person name="Isono Y."/>
            <person name="Nakamura Y."/>
            <person name="Nagahari K."/>
            <person name="Murakami K."/>
            <person name="Yasuda T."/>
            <person name="Iwayanagi T."/>
            <person name="Wagatsuma M."/>
            <person name="Shiratori A."/>
            <person name="Sudo H."/>
            <person name="Hosoiri T."/>
            <person name="Kaku Y."/>
            <person name="Kodaira H."/>
            <person name="Kondo H."/>
            <person name="Sugawara M."/>
            <person name="Takahashi M."/>
            <person name="Kanda K."/>
            <person name="Yokoi T."/>
            <person name="Furuya T."/>
            <person name="Kikkawa E."/>
            <person name="Omura Y."/>
            <person name="Abe K."/>
            <person name="Kamihara K."/>
            <person name="Katsuta N."/>
            <person name="Sato K."/>
            <person name="Tanikawa M."/>
            <person name="Yamazaki M."/>
            <person name="Ninomiya K."/>
            <person name="Ishibashi T."/>
            <person name="Yamashita H."/>
            <person name="Murakawa K."/>
            <person name="Fujimori K."/>
            <person name="Tanai H."/>
            <person name="Kimata M."/>
            <person name="Watanabe M."/>
            <person name="Hiraoka S."/>
            <person name="Chiba Y."/>
            <person name="Ishida S."/>
            <person name="Ono Y."/>
            <person name="Takiguchi S."/>
            <person name="Watanabe S."/>
            <person name="Yosida M."/>
            <person name="Hotuta T."/>
            <person name="Kusano J."/>
            <person name="Kanehori K."/>
            <person name="Takahashi-Fujii A."/>
            <person name="Hara H."/>
            <person name="Tanase T.-O."/>
            <person name="Nomura Y."/>
            <person name="Togiya S."/>
            <person name="Komai F."/>
            <person name="Hara R."/>
            <person name="Takeuchi K."/>
            <person name="Arita M."/>
            <person name="Imose N."/>
            <person name="Musashino K."/>
            <person name="Yuuki H."/>
            <person name="Oshima A."/>
            <person name="Sasaki N."/>
            <person name="Aotsuka S."/>
            <person name="Yoshikawa Y."/>
            <person name="Matsunawa H."/>
            <person name="Ichihara T."/>
            <person name="Shiohata N."/>
            <person name="Sano S."/>
            <person name="Moriya S."/>
            <person name="Momiyama H."/>
            <person name="Satoh N."/>
            <person name="Takami S."/>
            <person name="Terashima Y."/>
            <person name="Suzuki O."/>
            <person name="Nakagawa S."/>
            <person name="Senoh A."/>
            <person name="Mizoguchi H."/>
            <person name="Goto Y."/>
            <person name="Shimizu F."/>
            <person name="Wakebe H."/>
            <person name="Hishigaki H."/>
            <person name="Watanabe T."/>
            <person name="Sugiyama A."/>
            <person name="Takemoto M."/>
            <person name="Kawakami B."/>
            <person name="Yamazaki M."/>
            <person name="Watanabe K."/>
            <person name="Kumagai A."/>
            <person name="Itakura S."/>
            <person name="Fukuzumi Y."/>
            <person name="Fujimori Y."/>
            <person name="Komiyama M."/>
            <person name="Tashiro H."/>
            <person name="Tanigami A."/>
            <person name="Fujiwara T."/>
            <person name="Ono T."/>
            <person name="Yamada K."/>
            <person name="Fujii Y."/>
            <person name="Ozaki K."/>
            <person name="Hirao M."/>
            <person name="Ohmori Y."/>
            <person name="Kawabata A."/>
            <person name="Hikiji T."/>
            <person name="Kobatake N."/>
            <person name="Inagaki H."/>
            <person name="Ikema Y."/>
            <person name="Okamoto S."/>
            <person name="Okitani R."/>
            <person name="Kawakami T."/>
            <person name="Noguchi S."/>
            <person name="Itoh T."/>
            <person name="Shigeta K."/>
            <person name="Senba T."/>
            <person name="Matsumura K."/>
            <person name="Nakajima Y."/>
            <person name="Mizuno T."/>
            <person name="Morinaga M."/>
            <person name="Sasaki M."/>
            <person name="Togashi T."/>
            <person name="Oyama M."/>
            <person name="Hata H."/>
            <person name="Watanabe M."/>
            <person name="Komatsu T."/>
            <person name="Mizushima-Sugano J."/>
            <person name="Satoh T."/>
            <person name="Shirai Y."/>
            <person name="Takahashi Y."/>
            <person name="Nakagawa K."/>
            <person name="Okumura K."/>
            <person name="Nagase T."/>
            <person name="Nomura N."/>
            <person name="Kikuchi H."/>
            <person name="Masuho Y."/>
            <person name="Yamashita R."/>
            <person name="Nakai K."/>
            <person name="Yada T."/>
            <person name="Nakamura Y."/>
            <person name="Ohara O."/>
            <person name="Isogai T."/>
            <person name="Sugano S."/>
        </authorList>
    </citation>
    <scope>NUCLEOTIDE SEQUENCE [LARGE SCALE MRNA] OF 57-1127 (ISOFORM 7)</scope>
    <source>
        <tissue>Teratocarcinoma</tissue>
    </source>
</reference>
<reference key="6">
    <citation type="journal article" date="2001" name="Nature">
        <title>Selectivity of chromatin-remodelling cofactors for ligand-activated transcription.</title>
        <authorList>
            <person name="Lemon B."/>
            <person name="Inouye C."/>
            <person name="King D.S."/>
            <person name="Tjian R."/>
        </authorList>
    </citation>
    <scope>IDENTIFICATION IN THE PBAF COMPLEX</scope>
    <scope>IDENTIFICATION IN A SWI/SNF COMPLEX</scope>
    <scope>IDENTIFICATION BY MASS SPECTROMETRY</scope>
</reference>
<reference key="7">
    <citation type="journal article" date="2006" name="Cell">
        <title>Global, in vivo, and site-specific phosphorylation dynamics in signaling networks.</title>
        <authorList>
            <person name="Olsen J.V."/>
            <person name="Blagoev B."/>
            <person name="Gnad F."/>
            <person name="Macek B."/>
            <person name="Kumar C."/>
            <person name="Mortensen P."/>
            <person name="Mann M."/>
        </authorList>
    </citation>
    <scope>PHOSPHORYLATION [LARGE SCALE ANALYSIS] AT SER-39</scope>
    <scope>IDENTIFICATION BY MASS SPECTROMETRY [LARGE SCALE ANALYSIS]</scope>
    <source>
        <tissue>Cervix carcinoma</tissue>
    </source>
</reference>
<reference key="8">
    <citation type="journal article" date="2006" name="Nat. Biotechnol.">
        <title>A probability-based approach for high-throughput protein phosphorylation analysis and site localization.</title>
        <authorList>
            <person name="Beausoleil S.A."/>
            <person name="Villen J."/>
            <person name="Gerber S.A."/>
            <person name="Rush J."/>
            <person name="Gygi S.P."/>
        </authorList>
    </citation>
    <scope>PHOSPHORYLATION [LARGE SCALE ANALYSIS] AT SER-1453</scope>
    <scope>IDENTIFICATION BY MASS SPECTROMETRY [LARGE SCALE ANALYSIS]</scope>
    <source>
        <tissue>Cervix carcinoma</tissue>
    </source>
</reference>
<reference key="9">
    <citation type="journal article" date="2008" name="Proc. Natl. Acad. Sci. U.S.A.">
        <title>A quantitative atlas of mitotic phosphorylation.</title>
        <authorList>
            <person name="Dephoure N."/>
            <person name="Zhou C."/>
            <person name="Villen J."/>
            <person name="Beausoleil S.A."/>
            <person name="Bakalarski C.E."/>
            <person name="Elledge S.J."/>
            <person name="Gygi S.P."/>
        </authorList>
    </citation>
    <scope>PHOSPHORYLATION [LARGE SCALE ANALYSIS] AT SER-10; SER-39; SER-131; SER-316; SER-319; SER-353; SER-355 AND SER-1405</scope>
    <scope>IDENTIFICATION BY MASS SPECTROMETRY [LARGE SCALE ANALYSIS]</scope>
    <source>
        <tissue>Cervix carcinoma</tissue>
    </source>
</reference>
<reference key="10">
    <citation type="journal article" date="2009" name="Anal. Chem.">
        <title>Lys-N and trypsin cover complementary parts of the phosphoproteome in a refined SCX-based approach.</title>
        <authorList>
            <person name="Gauci S."/>
            <person name="Helbig A.O."/>
            <person name="Slijper M."/>
            <person name="Krijgsveld J."/>
            <person name="Heck A.J."/>
            <person name="Mohammed S."/>
        </authorList>
    </citation>
    <scope>IDENTIFICATION BY MASS SPECTROMETRY [LARGE SCALE ANALYSIS]</scope>
</reference>
<reference key="11">
    <citation type="journal article" date="2009" name="Sci. Signal.">
        <title>Quantitative phosphoproteomic analysis of T cell receptor signaling reveals system-wide modulation of protein-protein interactions.</title>
        <authorList>
            <person name="Mayya V."/>
            <person name="Lundgren D.H."/>
            <person name="Hwang S.-I."/>
            <person name="Rezaul K."/>
            <person name="Wu L."/>
            <person name="Eng J.K."/>
            <person name="Rodionov V."/>
            <person name="Han D.K."/>
        </authorList>
    </citation>
    <scope>PHOSPHORYLATION [LARGE SCALE ANALYSIS] AT SER-10; SER-39; SER-353; SER-355; SER-371; SER-375; SER-498 AND SER-636</scope>
    <scope>IDENTIFICATION BY MASS SPECTROMETRY [LARGE SCALE ANALYSIS]</scope>
    <source>
        <tissue>Leukemic T-cell</tissue>
    </source>
</reference>
<reference key="12">
    <citation type="journal article" date="2010" name="Sci. Signal.">
        <title>Quantitative phosphoproteomics reveals widespread full phosphorylation site occupancy during mitosis.</title>
        <authorList>
            <person name="Olsen J.V."/>
            <person name="Vermeulen M."/>
            <person name="Santamaria A."/>
            <person name="Kumar C."/>
            <person name="Miller M.L."/>
            <person name="Jensen L.J."/>
            <person name="Gnad F."/>
            <person name="Cox J."/>
            <person name="Jensen T.S."/>
            <person name="Nigg E.A."/>
            <person name="Brunak S."/>
            <person name="Mann M."/>
        </authorList>
    </citation>
    <scope>PHOSPHORYLATION [LARGE SCALE ANALYSIS] AT SER-39; SER-353; SER-355; SER-636; SER-1405 AND SER-1453</scope>
    <scope>IDENTIFICATION BY MASS SPECTROMETRY [LARGE SCALE ANALYSIS]</scope>
    <source>
        <tissue>Cervix carcinoma</tissue>
    </source>
</reference>
<reference key="13">
    <citation type="journal article" date="2011" name="BMC Syst. Biol.">
        <title>Initial characterization of the human central proteome.</title>
        <authorList>
            <person name="Burkard T.R."/>
            <person name="Planyavsky M."/>
            <person name="Kaupe I."/>
            <person name="Breitwieser F.P."/>
            <person name="Buerckstuemmer T."/>
            <person name="Bennett K.L."/>
            <person name="Superti-Furga G."/>
            <person name="Colinge J."/>
        </authorList>
    </citation>
    <scope>IDENTIFICATION BY MASS SPECTROMETRY [LARGE SCALE ANALYSIS]</scope>
</reference>
<reference key="14">
    <citation type="journal article" date="2011" name="Nature">
        <title>Exome sequencing identifies frequent mutation of the SWI/SNF complex gene PBRM1 in renal carcinoma.</title>
        <authorList>
            <person name="Varela I."/>
            <person name="Tarpey P."/>
            <person name="Raine K."/>
            <person name="Huang D."/>
            <person name="Ong C.K."/>
            <person name="Stephens P."/>
            <person name="Davies H."/>
            <person name="Jones D."/>
            <person name="Lin M.L."/>
            <person name="Teague J."/>
            <person name="Bignell G."/>
            <person name="Butler A."/>
            <person name="Cho J."/>
            <person name="Dalgliesh G.L."/>
            <person name="Galappaththige D."/>
            <person name="Greenman C."/>
            <person name="Hardy C."/>
            <person name="Jia M."/>
            <person name="Latimer C."/>
            <person name="Lau K.W."/>
            <person name="Marshall J."/>
            <person name="McLaren S."/>
            <person name="Menzies A."/>
            <person name="Mudie L."/>
            <person name="Stebbings L."/>
            <person name="Largaespada D.A."/>
            <person name="Wessels L.F.A."/>
            <person name="Richard S."/>
            <person name="Kahnoski R.J."/>
            <person name="Anema J."/>
            <person name="Tuveson D.A."/>
            <person name="Perez-Mancera P.A."/>
            <person name="Mustonen V."/>
            <person name="Fischer A."/>
            <person name="Adams D.J."/>
            <person name="Rust A."/>
            <person name="Chan-On W."/>
            <person name="Subimerb C."/>
            <person name="Dykema K."/>
            <person name="Furge K."/>
            <person name="Campbell P.J."/>
            <person name="Teh B.T."/>
            <person name="Stratton M.R."/>
            <person name="Futreal P.A."/>
        </authorList>
    </citation>
    <scope>FUNCTION AS NEGATIVE REGULATOR OF CELL PROLIFERATION</scope>
    <scope>INVOLVEMENT IN RCC</scope>
    <scope>VARIANTS LEU-49; ALA-56; ILE-57 DEL; GLY-66; GLU-90; PHE-144; ALA-160; CYS-202; LYS-206; GLY-226; VAL-228; PRO-232; THR-233; THR-256; ALA-340; ILE-523; SER-540; ASP-597; GLU-621; ASN-661; GLU-674; CYS-678; CYS-893; SER-895; GLN-922; GLN-925; TYR-1079; SER-1098; GLN-1120; SER-1177; PRO-1204; 1209-MET--GLU-1214 DEL; GLN-1287; GLU-1414; CYS-1503; HIS-1560; ASN-1614 AND CYS-1647</scope>
</reference>
<reference key="15">
    <citation type="journal article" date="2011" name="Sci. Signal.">
        <title>System-wide temporal characterization of the proteome and phosphoproteome of human embryonic stem cell differentiation.</title>
        <authorList>
            <person name="Rigbolt K.T."/>
            <person name="Prokhorova T.A."/>
            <person name="Akimov V."/>
            <person name="Henningsen J."/>
            <person name="Johansen P.T."/>
            <person name="Kratchmarova I."/>
            <person name="Kassem M."/>
            <person name="Mann M."/>
            <person name="Olsen J.V."/>
            <person name="Blagoev B."/>
        </authorList>
    </citation>
    <scope>PHOSPHORYLATION [LARGE SCALE ANALYSIS] AT SER-353; SER-355; SER-636; SER-648 AND SER-1453</scope>
    <scope>IDENTIFICATION BY MASS SPECTROMETRY [LARGE SCALE ANALYSIS]</scope>
</reference>
<reference key="16">
    <citation type="journal article" date="2013" name="J. Proteome Res.">
        <title>Toward a comprehensive characterization of a human cancer cell phosphoproteome.</title>
        <authorList>
            <person name="Zhou H."/>
            <person name="Di Palma S."/>
            <person name="Preisinger C."/>
            <person name="Peng M."/>
            <person name="Polat A.N."/>
            <person name="Heck A.J."/>
            <person name="Mohammed S."/>
        </authorList>
    </citation>
    <scope>PHOSPHORYLATION [LARGE SCALE ANALYSIS] AT TYR-134; SER-178; SER-498; SER-509; SER-636; SER-689; SER-948; SER-987; SER-1119 AND SER-1405</scope>
    <scope>IDENTIFICATION BY MASS SPECTROMETRY [LARGE SCALE ANALYSIS]</scope>
    <source>
        <tissue>Cervix carcinoma</tissue>
        <tissue>Erythroleukemia</tissue>
    </source>
</reference>
<reference key="17">
    <citation type="journal article" date="2014" name="J. Proteomics">
        <title>An enzyme assisted RP-RPLC approach for in-depth analysis of human liver phosphoproteome.</title>
        <authorList>
            <person name="Bian Y."/>
            <person name="Song C."/>
            <person name="Cheng K."/>
            <person name="Dong M."/>
            <person name="Wang F."/>
            <person name="Huang J."/>
            <person name="Sun D."/>
            <person name="Wang L."/>
            <person name="Ye M."/>
            <person name="Zou H."/>
        </authorList>
    </citation>
    <scope>PHOSPHORYLATION [LARGE SCALE ANALYSIS] AT SER-39 AND SER-948</scope>
    <scope>IDENTIFICATION BY MASS SPECTROMETRY [LARGE SCALE ANALYSIS]</scope>
    <source>
        <tissue>Liver</tissue>
    </source>
</reference>
<reference key="18">
    <citation type="journal article" date="2014" name="Nat. Struct. Mol. Biol.">
        <title>Uncovering global SUMOylation signaling networks in a site-specific manner.</title>
        <authorList>
            <person name="Hendriks I.A."/>
            <person name="D'Souza R.C."/>
            <person name="Yang B."/>
            <person name="Verlaan-de Vries M."/>
            <person name="Mann M."/>
            <person name="Vertegaal A.C."/>
        </authorList>
    </citation>
    <scope>SUMOYLATION [LARGE SCALE ANALYSIS] AT LYS-1293</scope>
    <scope>IDENTIFICATION BY MASS SPECTROMETRY [LARGE SCALE ANALYSIS]</scope>
</reference>
<reference key="19">
    <citation type="journal article" date="2014" name="Proc. Natl. Acad. Sci. U.S.A.">
        <title>Mapping of SUMO sites and analysis of SUMOylation changes induced by external stimuli.</title>
        <authorList>
            <person name="Impens F."/>
            <person name="Radoshevich L."/>
            <person name="Cossart P."/>
            <person name="Ribet D."/>
        </authorList>
    </citation>
    <scope>SUMOYLATION [LARGE SCALE ANALYSIS] AT LYS-1293</scope>
    <scope>IDENTIFICATION BY MASS SPECTROMETRY [LARGE SCALE ANALYSIS]</scope>
</reference>
<reference key="20">
    <citation type="journal article" date="2015" name="Cell Rep.">
        <title>SUMO-2 orchestrates chromatin modifiers in response to DNA damage.</title>
        <authorList>
            <person name="Hendriks I.A."/>
            <person name="Treffers L.W."/>
            <person name="Verlaan-de Vries M."/>
            <person name="Olsen J.V."/>
            <person name="Vertegaal A.C."/>
        </authorList>
    </citation>
    <scope>SUMOYLATION [LARGE SCALE ANALYSIS] AT LYS-1293</scope>
    <scope>IDENTIFICATION BY MASS SPECTROMETRY [LARGE SCALE ANALYSIS]</scope>
</reference>
<reference key="21">
    <citation type="journal article" date="2015" name="Genes Dev.">
        <title>Screen identifies bromodomain protein ZMYND8 in chromatin recognition of transcription-associated DNA damage that promotes homologous recombination.</title>
        <authorList>
            <person name="Gong F."/>
            <person name="Chiu L.Y."/>
            <person name="Cox B."/>
            <person name="Aymard F."/>
            <person name="Clouaire T."/>
            <person name="Leung J.W."/>
            <person name="Cammarata M."/>
            <person name="Perez M."/>
            <person name="Agarwal P."/>
            <person name="Brodbelt J.S."/>
            <person name="Legube G."/>
            <person name="Miller K.M."/>
        </authorList>
    </citation>
    <scope>SUBCELLULAR LOCATION</scope>
</reference>
<reference key="22">
    <citation type="journal article" date="2015" name="Mol. Cell. Proteomics">
        <title>System-wide analysis of SUMOylation dynamics in response to replication stress reveals novel small ubiquitin-like modified target proteins and acceptor lysines relevant for genome stability.</title>
        <authorList>
            <person name="Xiao Z."/>
            <person name="Chang J.G."/>
            <person name="Hendriks I.A."/>
            <person name="Sigurdsson J.O."/>
            <person name="Olsen J.V."/>
            <person name="Vertegaal A.C."/>
        </authorList>
    </citation>
    <scope>SUMOYLATION [LARGE SCALE ANALYSIS] AT LYS-653; LYS-1293; LYS-1308 AND LYS-1398</scope>
    <scope>IDENTIFICATION BY MASS SPECTROMETRY [LARGE SCALE ANALYSIS]</scope>
</reference>
<reference key="23">
    <citation type="journal article" date="2017" name="Nat. Struct. Mol. Biol.">
        <title>Site-specific mapping of the human SUMO proteome reveals co-modification with phosphorylation.</title>
        <authorList>
            <person name="Hendriks I.A."/>
            <person name="Lyon D."/>
            <person name="Young C."/>
            <person name="Jensen L.J."/>
            <person name="Vertegaal A.C."/>
            <person name="Nielsen M.L."/>
        </authorList>
    </citation>
    <scope>SUMOYLATION [LARGE SCALE ANALYSIS] AT LYS-96; LYS-154; LYS-210; LYS-425; LYS-471; LYS-511; LYS-591; LYS-638; LYS-653; LYS-1106; LYS-1111; LYS-1167; LYS-1293; LYS-1308; LYS-1398; LYS-1642; LYS-1654 AND LYS-1656</scope>
    <scope>IDENTIFICATION BY MASS SPECTROMETRY [LARGE SCALE ANALYSIS]</scope>
</reference>
<reference key="24">
    <citation type="journal article" date="2003" name="Curr. Opin. Genet. Dev.">
        <title>Recent advances in understanding chromatin remodeling by SWI/SNF complexes.</title>
        <authorList>
            <person name="Martens J.A."/>
            <person name="Winston F."/>
        </authorList>
    </citation>
    <scope>REVIEW ON SWI/SNF CHROMATIN-REMODELING COMPLEXES</scope>
</reference>
<reference key="25">
    <citation type="journal article" date="2005" name="Genes Dev.">
        <title>PBAF chromatin-remodeling complex requires a novel specificity subunit, BAF200, to regulate expression of selective interferon-responsive genes.</title>
        <authorList>
            <person name="Yan Z."/>
            <person name="Cui K."/>
            <person name="Murray D.M."/>
            <person name="Ling C."/>
            <person name="Xue Y."/>
            <person name="Gerstein A."/>
            <person name="Parsons R."/>
            <person name="Zhao K."/>
            <person name="Wang W."/>
        </authorList>
    </citation>
    <scope>IDENTIFICATION IN THE PBAF COMPLEX</scope>
</reference>
<reference key="26">
    <citation type="journal article" date="2012" name="J. Biol. Chem.">
        <title>SWI/SNF chromatin-remodeling factors: multiscale analyses and diverse functions.</title>
        <authorList>
            <person name="Euskirchen G."/>
            <person name="Auerbach R.K."/>
            <person name="Snyder M."/>
        </authorList>
    </citation>
    <scope>REVIEW ON SWI/SNF CHROMATIN REMODELING COMPLEXES</scope>
</reference>
<reference key="27">
    <citation type="journal article" date="2015" name="Sci. Adv.">
        <title>Mammalian SWI/SNF chromatin remodeling complexes and cancer: Mechanistic insights gained from human genomics.</title>
        <authorList>
            <person name="Kadoch C."/>
            <person name="Crabtree G.R."/>
        </authorList>
    </citation>
    <scope>REVIEW ON SWI/SNF CHROMATIN REMODELING COMPLEXES</scope>
</reference>
<reference key="28">
    <citation type="journal article" date="2010" name="Cell Res.">
        <title>Structural insights into selective histone H3 recognition by the human polybromo bromodomain 2.</title>
        <authorList>
            <person name="Charlop-Powers Z."/>
            <person name="Zeng L."/>
            <person name="Zhang Q."/>
            <person name="Zhou M.M."/>
        </authorList>
    </citation>
    <scope>X-RAY CRYSTALLOGRAPHY (1.5 ANGSTROMS) OF 174-293</scope>
    <scope>INTERACTION WITH ACETYLATED HISTONE H3</scope>
</reference>
<reference key="29">
    <citation type="journal article" date="2012" name="Cell">
        <title>Histone recognition and large-scale structural analysis of the human bromodomain family.</title>
        <authorList>
            <person name="Filippakopoulos P."/>
            <person name="Picaud S."/>
            <person name="Mangos M."/>
            <person name="Keates T."/>
            <person name="Lambert J.P."/>
            <person name="Barsyte-Lovejoy D."/>
            <person name="Felletar I."/>
            <person name="Volkmer R."/>
            <person name="Muller S."/>
            <person name="Pawson T."/>
            <person name="Gingras A.C."/>
            <person name="Arrowsmith C.H."/>
            <person name="Knapp S."/>
        </authorList>
    </citation>
    <scope>X-RAY CRYSTALLOGRAPHY (1.63 ANGSTROMS) OF 43-917</scope>
    <scope>INTERACTION WITH HISTONE H3</scope>
</reference>
<comment type="function">
    <text evidence="11 18 19">Involved in transcriptional activation and repression of select genes by chromatin remodeling (alteration of DNA-nucleosome topology). Required for the stability of the SWI/SNF chromatin remodeling complex SWI/SNF-B (PBAF). Acts as a negative regulator of cell proliferation.</text>
</comment>
<comment type="subunit">
    <text evidence="1 6 7 9 10 12 18 19">Component of the SWI/SNF-B (PBAF) chromatin remodeling complex, at least composed of SMARCA4/BRG1, SMARCB1/BAF47/SNF5, ACTL6A/BAF53A or ACTL6B/BAF53B, SMARCE1/BAF57, SMARCD1/BAF60A, SMARCD2/BAF60B, perhaps SMARCD3/BAF60C, SMARCC1/BAF155, SMARCC2/BAF170, PBRM1/BAF180, ARID2/BAF200 and actin. Interacts with PHF10/BAF45A (By similarity). Interacts with acetylated 'Lys-14' of histone H3 (H3K14ac), and may also interact with other acetylated or methylated Lys residues on histone H3.</text>
</comment>
<comment type="interaction">
    <interactant intactId="EBI-637807">
        <id>Q86U86</id>
    </interactant>
    <interactant intactId="EBI-637818">
        <id>Q68CP9</id>
        <label>ARID2</label>
    </interactant>
    <organismsDiffer>false</organismsDiffer>
    <experiments>5</experiments>
</comment>
<comment type="interaction">
    <interactant intactId="EBI-637807">
        <id>Q86U86</id>
    </interactant>
    <interactant intactId="EBI-11700916">
        <id>O95696-1</id>
        <label>BRD1</label>
    </interactant>
    <organismsDiffer>false</organismsDiffer>
    <experiments>2</experiments>
</comment>
<comment type="interaction">
    <interactant intactId="EBI-637807">
        <id>Q86U86</id>
    </interactant>
    <interactant intactId="EBI-11017508">
        <id>O95696-2</id>
        <label>BRD1</label>
    </interactant>
    <organismsDiffer>false</organismsDiffer>
    <experiments>2</experiments>
</comment>
<comment type="interaction">
    <interactant intactId="EBI-637807">
        <id>Q86U86</id>
    </interactant>
    <interactant intactId="EBI-3951683">
        <id>Q9P2D1</id>
        <label>CHD7</label>
    </interactant>
    <organismsDiffer>false</organismsDiffer>
    <experiments>4</experiments>
</comment>
<comment type="interaction">
    <interactant intactId="EBI-637807">
        <id>Q86U86</id>
    </interactant>
    <interactant intactId="EBI-302489">
        <id>P51532</id>
        <label>SMARCA4</label>
    </interactant>
    <organismsDiffer>false</organismsDiffer>
    <experiments>7</experiments>
</comment>
<comment type="interaction">
    <interactant intactId="EBI-637807">
        <id>Q86U86</id>
    </interactant>
    <interactant intactId="EBI-6164389">
        <id>P04608</id>
        <label>tat</label>
    </interactant>
    <organismsDiffer>true</organismsDiffer>
    <experiments>2</experiments>
</comment>
<comment type="subcellular location">
    <subcellularLocation>
        <location evidence="13 18 19">Nucleus</location>
    </subcellularLocation>
</comment>
<comment type="alternative products">
    <event type="alternative splicing"/>
    <isoform>
        <id>Q86U86-1</id>
        <name>1</name>
        <sequence type="displayed"/>
    </isoform>
    <isoform>
        <id>Q86U86-2</id>
        <name>2</name>
        <sequence type="described" ref="VSP_015235"/>
    </isoform>
    <isoform>
        <id>Q86U86-3</id>
        <name>3</name>
        <sequence type="described" ref="VSP_015231 VSP_015235"/>
    </isoform>
    <isoform>
        <id>Q86U86-4</id>
        <name>4</name>
        <sequence type="described" ref="VSP_015233 VSP_015234 VSP_015235"/>
    </isoform>
    <isoform>
        <id>Q86U86-5</id>
        <name>5</name>
        <sequence type="described" ref="VSP_015235 VSP_015236"/>
    </isoform>
    <isoform>
        <id>Q86U86-6</id>
        <name>6</name>
        <sequence type="described" ref="VSP_015232"/>
    </isoform>
    <isoform>
        <id>Q86U86-7</id>
        <name>7</name>
        <sequence type="described" ref="VSP_035499 VSP_015235 VSP_015236"/>
    </isoform>
    <isoform>
        <id>Q86U86-8</id>
        <name>8</name>
        <sequence type="described" ref="VSP_035499 VSP_015236"/>
    </isoform>
    <isoform>
        <id>Q86U86-9</id>
        <name>9</name>
        <sequence type="described" ref="VSP_015233 VSP_015235"/>
    </isoform>
</comment>
<comment type="tissue specificity">
    <text evidence="8">Widely expressed.</text>
</comment>
<comment type="disease" evidence="11">
    <disease id="DI-02254">
        <name>Renal cell carcinoma</name>
        <acronym>RCC</acronym>
        <description>Renal cell carcinoma is a heterogeneous group of sporadic or hereditary carcinoma derived from cells of the proximal renal tubular epithelium. It is subclassified into clear cell renal carcinoma (non-papillary carcinoma), papillary renal cell carcinoma, chromophobe renal cell carcinoma, collecting duct carcinoma with medullary carcinoma of the kidney, and unclassified renal cell carcinoma. Clear cell renal cell carcinoma is the most common subtype.</description>
        <dbReference type="MIM" id="144700"/>
    </disease>
    <text>The disease is caused by variants affecting the gene represented in this entry.</text>
</comment>
<comment type="sequence caution" evidence="20">
    <conflict type="miscellaneous discrepancy">
        <sequence resource="EMBL-CDS" id="AAI15010"/>
    </conflict>
    <text>Contaminating sequence.</text>
</comment>
<comment type="sequence caution" evidence="20">
    <conflict type="erroneous initiation">
        <sequence resource="EMBL-CDS" id="AAI15011"/>
    </conflict>
    <text>Extended N-terminus.</text>
</comment>
<comment type="sequence caution" evidence="20">
    <conflict type="erroneous termination">
        <sequence resource="EMBL-CDS" id="AAI15012"/>
    </conflict>
    <text>Truncated C-terminus.</text>
</comment>
<comment type="sequence caution" evidence="20">
    <conflict type="erroneous initiation">
        <sequence resource="EMBL-CDS" id="BAB71210"/>
    </conflict>
    <text>Truncated N-terminus.</text>
</comment>
<organism>
    <name type="scientific">Homo sapiens</name>
    <name type="common">Human</name>
    <dbReference type="NCBI Taxonomy" id="9606"/>
    <lineage>
        <taxon>Eukaryota</taxon>
        <taxon>Metazoa</taxon>
        <taxon>Chordata</taxon>
        <taxon>Craniata</taxon>
        <taxon>Vertebrata</taxon>
        <taxon>Euteleostomi</taxon>
        <taxon>Mammalia</taxon>
        <taxon>Eutheria</taxon>
        <taxon>Euarchontoglires</taxon>
        <taxon>Primates</taxon>
        <taxon>Haplorrhini</taxon>
        <taxon>Catarrhini</taxon>
        <taxon>Hominidae</taxon>
        <taxon>Homo</taxon>
    </lineage>
</organism>
<gene>
    <name type="primary">PBRM1</name>
    <name type="synonym">BAF180</name>
    <name type="synonym">PB1</name>
</gene>